<name>FOXO1_MOUSE</name>
<dbReference type="EMBL" id="AF126056">
    <property type="protein sequence ID" value="AAD40636.1"/>
    <property type="molecule type" value="mRNA"/>
</dbReference>
<dbReference type="EMBL" id="AJ252157">
    <property type="protein sequence ID" value="CAB86873.1"/>
    <property type="molecule type" value="mRNA"/>
</dbReference>
<dbReference type="EMBL" id="AK137629">
    <property type="protein sequence ID" value="BAE23437.1"/>
    <property type="molecule type" value="mRNA"/>
</dbReference>
<dbReference type="EMBL" id="AK154041">
    <property type="protein sequence ID" value="BAE32333.1"/>
    <property type="molecule type" value="mRNA"/>
</dbReference>
<dbReference type="EMBL" id="CH466530">
    <property type="protein sequence ID" value="EDL35224.1"/>
    <property type="molecule type" value="Genomic_DNA"/>
</dbReference>
<dbReference type="CCDS" id="CCDS17343.1"/>
<dbReference type="RefSeq" id="NP_062713.2">
    <property type="nucleotide sequence ID" value="NM_019739.3"/>
</dbReference>
<dbReference type="SMR" id="Q9R1E0"/>
<dbReference type="BioGRID" id="207997">
    <property type="interactions" value="10"/>
</dbReference>
<dbReference type="CORUM" id="Q9R1E0"/>
<dbReference type="FunCoup" id="Q9R1E0">
    <property type="interactions" value="3408"/>
</dbReference>
<dbReference type="IntAct" id="Q9R1E0">
    <property type="interactions" value="16"/>
</dbReference>
<dbReference type="MINT" id="Q9R1E0"/>
<dbReference type="STRING" id="10090.ENSMUSP00000055308"/>
<dbReference type="GlyGen" id="Q9R1E0">
    <property type="glycosylation" value="4 sites, 1 O-linked glycan (4 sites)"/>
</dbReference>
<dbReference type="iPTMnet" id="Q9R1E0"/>
<dbReference type="PhosphoSitePlus" id="Q9R1E0"/>
<dbReference type="SwissPalm" id="Q9R1E0"/>
<dbReference type="jPOST" id="Q9R1E0"/>
<dbReference type="PaxDb" id="10090-ENSMUSP00000055308"/>
<dbReference type="PeptideAtlas" id="Q9R1E0"/>
<dbReference type="ProteomicsDB" id="267403"/>
<dbReference type="Antibodypedia" id="645">
    <property type="antibodies" value="2165 antibodies from 52 providers"/>
</dbReference>
<dbReference type="DNASU" id="56458"/>
<dbReference type="Ensembl" id="ENSMUST00000053764.7">
    <property type="protein sequence ID" value="ENSMUSP00000055308.6"/>
    <property type="gene ID" value="ENSMUSG00000044167.7"/>
</dbReference>
<dbReference type="GeneID" id="56458"/>
<dbReference type="KEGG" id="mmu:56458"/>
<dbReference type="UCSC" id="uc008pei.2">
    <property type="organism name" value="mouse"/>
</dbReference>
<dbReference type="AGR" id="MGI:1890077"/>
<dbReference type="CTD" id="2308"/>
<dbReference type="MGI" id="MGI:1890077">
    <property type="gene designation" value="Foxo1"/>
</dbReference>
<dbReference type="VEuPathDB" id="HostDB:ENSMUSG00000044167"/>
<dbReference type="eggNOG" id="KOG2294">
    <property type="taxonomic scope" value="Eukaryota"/>
</dbReference>
<dbReference type="GeneTree" id="ENSGT00940000161558"/>
<dbReference type="HOGENOM" id="CLU_023456_1_1_1"/>
<dbReference type="InParanoid" id="Q9R1E0"/>
<dbReference type="OMA" id="SHTMQMN"/>
<dbReference type="OrthoDB" id="5954824at2759"/>
<dbReference type="PhylomeDB" id="Q9R1E0"/>
<dbReference type="TreeFam" id="TF315583"/>
<dbReference type="Reactome" id="R-MMU-198693">
    <property type="pathway name" value="AKT phosphorylates targets in the nucleus"/>
</dbReference>
<dbReference type="Reactome" id="R-MMU-211163">
    <property type="pathway name" value="AKT-mediated inactivation of FOXO1A"/>
</dbReference>
<dbReference type="Reactome" id="R-MMU-5687128">
    <property type="pathway name" value="MAPK6/MAPK4 signaling"/>
</dbReference>
<dbReference type="Reactome" id="R-MMU-9614399">
    <property type="pathway name" value="Regulation of localization of FOXO transcription factors"/>
</dbReference>
<dbReference type="Reactome" id="R-MMU-9617629">
    <property type="pathway name" value="Regulation of FOXO transcriptional activity by acetylation"/>
</dbReference>
<dbReference type="Reactome" id="R-MMU-9617828">
    <property type="pathway name" value="FOXO-mediated transcription of cell cycle genes"/>
</dbReference>
<dbReference type="BioGRID-ORCS" id="56458">
    <property type="hits" value="3 hits in 82 CRISPR screens"/>
</dbReference>
<dbReference type="ChiTaRS" id="Foxo1">
    <property type="organism name" value="mouse"/>
</dbReference>
<dbReference type="PRO" id="PR:Q9R1E0"/>
<dbReference type="Proteomes" id="UP000000589">
    <property type="component" value="Chromosome 3"/>
</dbReference>
<dbReference type="RNAct" id="Q9R1E0">
    <property type="molecule type" value="protein"/>
</dbReference>
<dbReference type="Bgee" id="ENSMUSG00000044167">
    <property type="expression patterns" value="Expressed in secondary oocyte and 267 other cell types or tissues"/>
</dbReference>
<dbReference type="GO" id="GO:0005737">
    <property type="term" value="C:cytoplasm"/>
    <property type="evidence" value="ECO:0000314"/>
    <property type="project" value="UniProtKB"/>
</dbReference>
<dbReference type="GO" id="GO:0005654">
    <property type="term" value="C:nucleoplasm"/>
    <property type="evidence" value="ECO:0000304"/>
    <property type="project" value="Reactome"/>
</dbReference>
<dbReference type="GO" id="GO:0005634">
    <property type="term" value="C:nucleus"/>
    <property type="evidence" value="ECO:0000314"/>
    <property type="project" value="UniProtKB"/>
</dbReference>
<dbReference type="GO" id="GO:0008013">
    <property type="term" value="F:beta-catenin binding"/>
    <property type="evidence" value="ECO:0007669"/>
    <property type="project" value="Ensembl"/>
</dbReference>
<dbReference type="GO" id="GO:0031490">
    <property type="term" value="F:chromatin DNA binding"/>
    <property type="evidence" value="ECO:0000314"/>
    <property type="project" value="MGI"/>
</dbReference>
<dbReference type="GO" id="GO:0003677">
    <property type="term" value="F:DNA binding"/>
    <property type="evidence" value="ECO:0000314"/>
    <property type="project" value="MGI"/>
</dbReference>
<dbReference type="GO" id="GO:0001228">
    <property type="term" value="F:DNA-binding transcription activator activity, RNA polymerase II-specific"/>
    <property type="evidence" value="ECO:0000314"/>
    <property type="project" value="UniProtKB"/>
</dbReference>
<dbReference type="GO" id="GO:0003700">
    <property type="term" value="F:DNA-binding transcription factor activity"/>
    <property type="evidence" value="ECO:0000314"/>
    <property type="project" value="MGI"/>
</dbReference>
<dbReference type="GO" id="GO:0001227">
    <property type="term" value="F:DNA-binding transcription repressor activity, RNA polymerase II-specific"/>
    <property type="evidence" value="ECO:0000314"/>
    <property type="project" value="UniProtKB"/>
</dbReference>
<dbReference type="GO" id="GO:1990841">
    <property type="term" value="F:promoter-specific chromatin binding"/>
    <property type="evidence" value="ECO:0000314"/>
    <property type="project" value="MGI"/>
</dbReference>
<dbReference type="GO" id="GO:0051721">
    <property type="term" value="F:protein phosphatase 2A binding"/>
    <property type="evidence" value="ECO:0000314"/>
    <property type="project" value="UniProtKB"/>
</dbReference>
<dbReference type="GO" id="GO:0000978">
    <property type="term" value="F:RNA polymerase II cis-regulatory region sequence-specific DNA binding"/>
    <property type="evidence" value="ECO:0000314"/>
    <property type="project" value="GO_Central"/>
</dbReference>
<dbReference type="GO" id="GO:0043565">
    <property type="term" value="F:sequence-specific DNA binding"/>
    <property type="evidence" value="ECO:0000314"/>
    <property type="project" value="MGI"/>
</dbReference>
<dbReference type="GO" id="GO:0001223">
    <property type="term" value="F:transcription coactivator binding"/>
    <property type="evidence" value="ECO:0007669"/>
    <property type="project" value="Ensembl"/>
</dbReference>
<dbReference type="GO" id="GO:0008134">
    <property type="term" value="F:transcription factor binding"/>
    <property type="evidence" value="ECO:0000353"/>
    <property type="project" value="GO_Central"/>
</dbReference>
<dbReference type="GO" id="GO:0031625">
    <property type="term" value="F:ubiquitin protein ligase binding"/>
    <property type="evidence" value="ECO:0007669"/>
    <property type="project" value="Ensembl"/>
</dbReference>
<dbReference type="GO" id="GO:0006915">
    <property type="term" value="P:apoptotic process"/>
    <property type="evidence" value="ECO:0000250"/>
    <property type="project" value="UniProtKB"/>
</dbReference>
<dbReference type="GO" id="GO:0006914">
    <property type="term" value="P:autophagy"/>
    <property type="evidence" value="ECO:0007669"/>
    <property type="project" value="UniProtKB-KW"/>
</dbReference>
<dbReference type="GO" id="GO:0001568">
    <property type="term" value="P:blood vessel development"/>
    <property type="evidence" value="ECO:0000315"/>
    <property type="project" value="MGI"/>
</dbReference>
<dbReference type="GO" id="GO:0060070">
    <property type="term" value="P:canonical Wnt signaling pathway"/>
    <property type="evidence" value="ECO:0000316"/>
    <property type="project" value="MGI"/>
</dbReference>
<dbReference type="GO" id="GO:0030154">
    <property type="term" value="P:cell differentiation"/>
    <property type="evidence" value="ECO:0007669"/>
    <property type="project" value="UniProtKB-KW"/>
</dbReference>
<dbReference type="GO" id="GO:0071549">
    <property type="term" value="P:cellular response to dexamethasone stimulus"/>
    <property type="evidence" value="ECO:0007669"/>
    <property type="project" value="Ensembl"/>
</dbReference>
<dbReference type="GO" id="GO:0070301">
    <property type="term" value="P:cellular response to hydrogen peroxide"/>
    <property type="evidence" value="ECO:0007669"/>
    <property type="project" value="Ensembl"/>
</dbReference>
<dbReference type="GO" id="GO:0071455">
    <property type="term" value="P:cellular response to hyperoxia"/>
    <property type="evidence" value="ECO:0000250"/>
    <property type="project" value="UniProtKB"/>
</dbReference>
<dbReference type="GO" id="GO:0032869">
    <property type="term" value="P:cellular response to insulin stimulus"/>
    <property type="evidence" value="ECO:0000314"/>
    <property type="project" value="UniProtKB"/>
</dbReference>
<dbReference type="GO" id="GO:0071732">
    <property type="term" value="P:cellular response to nitric oxide"/>
    <property type="evidence" value="ECO:0000314"/>
    <property type="project" value="UniProtKB"/>
</dbReference>
<dbReference type="GO" id="GO:0034599">
    <property type="term" value="P:cellular response to oxidative stress"/>
    <property type="evidence" value="ECO:0000314"/>
    <property type="project" value="UniProtKB"/>
</dbReference>
<dbReference type="GO" id="GO:0009267">
    <property type="term" value="P:cellular response to starvation"/>
    <property type="evidence" value="ECO:0000250"/>
    <property type="project" value="UniProtKB"/>
</dbReference>
<dbReference type="GO" id="GO:0006974">
    <property type="term" value="P:DNA damage response"/>
    <property type="evidence" value="ECO:0000314"/>
    <property type="project" value="UniProtKB"/>
</dbReference>
<dbReference type="GO" id="GO:0070166">
    <property type="term" value="P:enamel mineralization"/>
    <property type="evidence" value="ECO:0007669"/>
    <property type="project" value="Ensembl"/>
</dbReference>
<dbReference type="GO" id="GO:0010467">
    <property type="term" value="P:gene expression"/>
    <property type="evidence" value="ECO:0000316"/>
    <property type="project" value="MGI"/>
</dbReference>
<dbReference type="GO" id="GO:0042593">
    <property type="term" value="P:glucose homeostasis"/>
    <property type="evidence" value="ECO:0000314"/>
    <property type="project" value="MGI"/>
</dbReference>
<dbReference type="GO" id="GO:0008286">
    <property type="term" value="P:insulin receptor signaling pathway"/>
    <property type="evidence" value="ECO:0000315"/>
    <property type="project" value="MGI"/>
</dbReference>
<dbReference type="GO" id="GO:0043066">
    <property type="term" value="P:negative regulation of apoptotic process"/>
    <property type="evidence" value="ECO:0000250"/>
    <property type="project" value="UniProtKB"/>
</dbReference>
<dbReference type="GO" id="GO:0090090">
    <property type="term" value="P:negative regulation of canonical Wnt signaling pathway"/>
    <property type="evidence" value="ECO:0000316"/>
    <property type="project" value="MGI"/>
</dbReference>
<dbReference type="GO" id="GO:1903243">
    <property type="term" value="P:negative regulation of cardiac muscle hypertrophy in response to stress"/>
    <property type="evidence" value="ECO:0000250"/>
    <property type="project" value="UniProtKB"/>
</dbReference>
<dbReference type="GO" id="GO:0045599">
    <property type="term" value="P:negative regulation of fat cell differentiation"/>
    <property type="evidence" value="ECO:0000315"/>
    <property type="project" value="UniProtKB"/>
</dbReference>
<dbReference type="GO" id="GO:0046676">
    <property type="term" value="P:negative regulation of insulin secretion"/>
    <property type="evidence" value="ECO:0000314"/>
    <property type="project" value="UniProtKB"/>
</dbReference>
<dbReference type="GO" id="GO:0032873">
    <property type="term" value="P:negative regulation of stress-activated MAPK cascade"/>
    <property type="evidence" value="ECO:0007669"/>
    <property type="project" value="Ensembl"/>
</dbReference>
<dbReference type="GO" id="GO:0097150">
    <property type="term" value="P:neuronal stem cell population maintenance"/>
    <property type="evidence" value="ECO:0000316"/>
    <property type="project" value="MGI"/>
</dbReference>
<dbReference type="GO" id="GO:0043065">
    <property type="term" value="P:positive regulation of apoptotic process"/>
    <property type="evidence" value="ECO:0000250"/>
    <property type="project" value="UniProtKB"/>
</dbReference>
<dbReference type="GO" id="GO:0010508">
    <property type="term" value="P:positive regulation of autophagy"/>
    <property type="evidence" value="ECO:0000250"/>
    <property type="project" value="UniProtKB"/>
</dbReference>
<dbReference type="GO" id="GO:0045893">
    <property type="term" value="P:positive regulation of DNA-templated transcription"/>
    <property type="evidence" value="ECO:0000314"/>
    <property type="project" value="MGI"/>
</dbReference>
<dbReference type="GO" id="GO:0045722">
    <property type="term" value="P:positive regulation of gluconeogenesis"/>
    <property type="evidence" value="ECO:0000315"/>
    <property type="project" value="MGI"/>
</dbReference>
<dbReference type="GO" id="GO:0045732">
    <property type="term" value="P:positive regulation of protein catabolic process"/>
    <property type="evidence" value="ECO:0000250"/>
    <property type="project" value="UniProtKB"/>
</dbReference>
<dbReference type="GO" id="GO:0034393">
    <property type="term" value="P:positive regulation of smooth muscle cell apoptotic process"/>
    <property type="evidence" value="ECO:0000250"/>
    <property type="project" value="UniProtKB"/>
</dbReference>
<dbReference type="GO" id="GO:0045944">
    <property type="term" value="P:positive regulation of transcription by RNA polymerase II"/>
    <property type="evidence" value="ECO:0000315"/>
    <property type="project" value="MGI"/>
</dbReference>
<dbReference type="GO" id="GO:0042127">
    <property type="term" value="P:regulation of cell population proliferation"/>
    <property type="evidence" value="ECO:0000315"/>
    <property type="project" value="MGI"/>
</dbReference>
<dbReference type="GO" id="GO:0006355">
    <property type="term" value="P:regulation of DNA-templated transcription"/>
    <property type="evidence" value="ECO:0000314"/>
    <property type="project" value="MGI"/>
</dbReference>
<dbReference type="GO" id="GO:0006111">
    <property type="term" value="P:regulation of gluconeogenesis"/>
    <property type="evidence" value="ECO:0000315"/>
    <property type="project" value="MGI"/>
</dbReference>
<dbReference type="GO" id="GO:2000177">
    <property type="term" value="P:regulation of neural precursor cell proliferation"/>
    <property type="evidence" value="ECO:0000316"/>
    <property type="project" value="MGI"/>
</dbReference>
<dbReference type="GO" id="GO:2000377">
    <property type="term" value="P:regulation of reactive oxygen species metabolic process"/>
    <property type="evidence" value="ECO:0000316"/>
    <property type="project" value="MGI"/>
</dbReference>
<dbReference type="GO" id="GO:0006357">
    <property type="term" value="P:regulation of transcription by RNA polymerase II"/>
    <property type="evidence" value="ECO:0000314"/>
    <property type="project" value="GO_Central"/>
</dbReference>
<dbReference type="GO" id="GO:0060260">
    <property type="term" value="P:regulation of transcription initiation by RNA polymerase II"/>
    <property type="evidence" value="ECO:0000250"/>
    <property type="project" value="UniProtKB"/>
</dbReference>
<dbReference type="GO" id="GO:0070542">
    <property type="term" value="P:response to fatty acid"/>
    <property type="evidence" value="ECO:0000314"/>
    <property type="project" value="UniProtKB"/>
</dbReference>
<dbReference type="GO" id="GO:1902617">
    <property type="term" value="P:response to fluoride"/>
    <property type="evidence" value="ECO:0007669"/>
    <property type="project" value="Ensembl"/>
</dbReference>
<dbReference type="GO" id="GO:0032868">
    <property type="term" value="P:response to insulin"/>
    <property type="evidence" value="ECO:0000316"/>
    <property type="project" value="MGI"/>
</dbReference>
<dbReference type="CDD" id="cd20060">
    <property type="entry name" value="FH_FOXO1"/>
    <property type="match status" value="1"/>
</dbReference>
<dbReference type="FunFam" id="1.10.10.10:FF:000032">
    <property type="entry name" value="Forkhead box protein O4"/>
    <property type="match status" value="1"/>
</dbReference>
<dbReference type="Gene3D" id="1.10.10.10">
    <property type="entry name" value="Winged helix-like DNA-binding domain superfamily/Winged helix DNA-binding domain"/>
    <property type="match status" value="1"/>
</dbReference>
<dbReference type="InterPro" id="IPR047408">
    <property type="entry name" value="FH_FOXO1"/>
</dbReference>
<dbReference type="InterPro" id="IPR001766">
    <property type="entry name" value="Fork_head_dom"/>
</dbReference>
<dbReference type="InterPro" id="IPR032067">
    <property type="entry name" value="FOXO-TAD"/>
</dbReference>
<dbReference type="InterPro" id="IPR032068">
    <property type="entry name" value="FOXO_KIX-bd"/>
</dbReference>
<dbReference type="InterPro" id="IPR030456">
    <property type="entry name" value="TF_fork_head_CS_2"/>
</dbReference>
<dbReference type="InterPro" id="IPR036388">
    <property type="entry name" value="WH-like_DNA-bd_sf"/>
</dbReference>
<dbReference type="InterPro" id="IPR036390">
    <property type="entry name" value="WH_DNA-bd_sf"/>
</dbReference>
<dbReference type="PANTHER" id="PTHR45767">
    <property type="entry name" value="FORKHEAD BOX PROTEIN O"/>
    <property type="match status" value="1"/>
</dbReference>
<dbReference type="PANTHER" id="PTHR45767:SF1">
    <property type="entry name" value="FORKHEAD BOX PROTEIN O1"/>
    <property type="match status" value="1"/>
</dbReference>
<dbReference type="Pfam" id="PF00250">
    <property type="entry name" value="Forkhead"/>
    <property type="match status" value="1"/>
</dbReference>
<dbReference type="Pfam" id="PF16676">
    <property type="entry name" value="FOXO-TAD"/>
    <property type="match status" value="1"/>
</dbReference>
<dbReference type="Pfam" id="PF16675">
    <property type="entry name" value="FOXO_KIX_bdg"/>
    <property type="match status" value="1"/>
</dbReference>
<dbReference type="PRINTS" id="PR00053">
    <property type="entry name" value="FORKHEAD"/>
</dbReference>
<dbReference type="SMART" id="SM00339">
    <property type="entry name" value="FH"/>
    <property type="match status" value="1"/>
</dbReference>
<dbReference type="SUPFAM" id="SSF46785">
    <property type="entry name" value="Winged helix' DNA-binding domain"/>
    <property type="match status" value="1"/>
</dbReference>
<dbReference type="PROSITE" id="PS00658">
    <property type="entry name" value="FORK_HEAD_2"/>
    <property type="match status" value="1"/>
</dbReference>
<dbReference type="PROSITE" id="PS50039">
    <property type="entry name" value="FORK_HEAD_3"/>
    <property type="match status" value="1"/>
</dbReference>
<evidence type="ECO:0000250" key="1"/>
<evidence type="ECO:0000250" key="2">
    <source>
        <dbReference type="UniProtKB" id="A4L7N3"/>
    </source>
</evidence>
<evidence type="ECO:0000250" key="3">
    <source>
        <dbReference type="UniProtKB" id="G3V7R4"/>
    </source>
</evidence>
<evidence type="ECO:0000250" key="4">
    <source>
        <dbReference type="UniProtKB" id="Q12778"/>
    </source>
</evidence>
<evidence type="ECO:0000255" key="5">
    <source>
        <dbReference type="PROSITE-ProRule" id="PRU00089"/>
    </source>
</evidence>
<evidence type="ECO:0000256" key="6">
    <source>
        <dbReference type="SAM" id="MobiDB-lite"/>
    </source>
</evidence>
<evidence type="ECO:0000269" key="7">
    <source>
    </source>
</evidence>
<evidence type="ECO:0000269" key="8">
    <source>
    </source>
</evidence>
<evidence type="ECO:0000269" key="9">
    <source>
    </source>
</evidence>
<evidence type="ECO:0000269" key="10">
    <source>
    </source>
</evidence>
<evidence type="ECO:0000269" key="11">
    <source>
    </source>
</evidence>
<evidence type="ECO:0000269" key="12">
    <source>
    </source>
</evidence>
<evidence type="ECO:0000269" key="13">
    <source>
    </source>
</evidence>
<evidence type="ECO:0000269" key="14">
    <source>
    </source>
</evidence>
<evidence type="ECO:0000269" key="15">
    <source>
    </source>
</evidence>
<evidence type="ECO:0000269" key="16">
    <source>
    </source>
</evidence>
<evidence type="ECO:0000269" key="17">
    <source>
    </source>
</evidence>
<evidence type="ECO:0000269" key="18">
    <source>
    </source>
</evidence>
<evidence type="ECO:0000269" key="19">
    <source>
    </source>
</evidence>
<evidence type="ECO:0000269" key="20">
    <source>
    </source>
</evidence>
<evidence type="ECO:0000269" key="21">
    <source>
    </source>
</evidence>
<evidence type="ECO:0000269" key="22">
    <source>
    </source>
</evidence>
<evidence type="ECO:0000269" key="23">
    <source>
    </source>
</evidence>
<evidence type="ECO:0000269" key="24">
    <source>
    </source>
</evidence>
<evidence type="ECO:0000269" key="25">
    <source>
    </source>
</evidence>
<evidence type="ECO:0000269" key="26">
    <source>
    </source>
</evidence>
<evidence type="ECO:0000269" key="27">
    <source>
    </source>
</evidence>
<evidence type="ECO:0000269" key="28">
    <source>
    </source>
</evidence>
<evidence type="ECO:0000269" key="29">
    <source>
    </source>
</evidence>
<evidence type="ECO:0000269" key="30">
    <source>
    </source>
</evidence>
<evidence type="ECO:0000269" key="31">
    <source>
    </source>
</evidence>
<evidence type="ECO:0000269" key="32">
    <source>
    </source>
</evidence>
<evidence type="ECO:0000269" key="33">
    <source>
    </source>
</evidence>
<evidence type="ECO:0000269" key="34">
    <source>
    </source>
</evidence>
<evidence type="ECO:0000269" key="35">
    <source>
    </source>
</evidence>
<evidence type="ECO:0000269" key="36">
    <source>
    </source>
</evidence>
<evidence type="ECO:0000269" key="37">
    <source>
    </source>
</evidence>
<evidence type="ECO:0000269" key="38">
    <source>
    </source>
</evidence>
<evidence type="ECO:0000305" key="39"/>
<evidence type="ECO:0007744" key="40">
    <source>
    </source>
</evidence>
<proteinExistence type="evidence at protein level"/>
<sequence length="652" mass="69518">MAEAPQVVETDPDFEPLPRQRSCTWPLPRPEFNQSNSTTSSPAPSGGAAANPDAAASLASASAVSTDFMSNLSLLEESEDFARAPGCVAVAAAAAASRGLCGDFQGPEAGCVHPAPPQPPPTGPLSQPPPVPPSAAAAAGPLAGQPRKTSSSRRNAWGNLSYADLITKAIESSAEKRLTLSQIYEWMVKSVPYFKDKGDSNSSAGWKNSIRHNLSLHSKFIRVQNEGTGKSSWWMLNPEGGKSGKSPRRRAASMDNNSKFAKSRGRAAKKKASLQSGQEGPGDSPGSQFSKWPASPGSHSNDDFDNWSTFRPRTSSNASTISGRLSPIMTEQDDLGDGDVHSLVYPPSAAKMASTLPSLSEISNPENMENLLDNLNLLSSPTSLTVSTQSSPGSMMQQTPCYSFAPPNTSLNSPSPNYSKYTYGQSSMSPLPQMPMQTLQDSKSSYGGLNQYNCAPGLLKELLTSDSPPHNDIMSPVDPGVAQPNSRVLGQNVMMGPNSVMPAYGSQASHNKMMNPSSHTHPGHAQQTASVNGRTLPHVVNTMPHTSAMNRLTPVKTPLQVPLSHPMQMSALGSYSSVSSCNGYGRMGVLHQEKLPSDLDGMFIERLDCDMESIIRNDLMDGDTLDFNFDNVLPNQSFPHSVKTTTHSWVSG</sequence>
<reference key="1">
    <citation type="journal article" date="1999" name="J. Biol. Chem.">
        <title>Insulin stimulates phosphorylation of the forkhead transcription factor FKHR on serine 253 through a Wortmannin-sensitive pathway.</title>
        <authorList>
            <person name="Nakae J."/>
            <person name="Park B.C."/>
            <person name="Accili D."/>
        </authorList>
    </citation>
    <scope>NUCLEOTIDE SEQUENCE [MRNA]</scope>
    <scope>PHOSPHORYLATION AT THR-24; SER-253 AND SER-316</scope>
    <scope>MUTAGENESIS OF THR-24; SER-253 AND SER-316</scope>
    <source>
        <tissue>Liver</tissue>
    </source>
</reference>
<reference key="2">
    <citation type="submission" date="2000-01" db="EMBL/GenBank/DDBJ databases">
        <title>The forkhead FKHR is involved in thymocyte proliferation.</title>
        <authorList>
            <person name="Leenders H."/>
            <person name="Benoist C."/>
            <person name="Mathis D."/>
        </authorList>
    </citation>
    <scope>NUCLEOTIDE SEQUENCE [MRNA]</scope>
</reference>
<reference key="3">
    <citation type="journal article" date="2005" name="Science">
        <title>The transcriptional landscape of the mammalian genome.</title>
        <authorList>
            <person name="Carninci P."/>
            <person name="Kasukawa T."/>
            <person name="Katayama S."/>
            <person name="Gough J."/>
            <person name="Frith M.C."/>
            <person name="Maeda N."/>
            <person name="Oyama R."/>
            <person name="Ravasi T."/>
            <person name="Lenhard B."/>
            <person name="Wells C."/>
            <person name="Kodzius R."/>
            <person name="Shimokawa K."/>
            <person name="Bajic V.B."/>
            <person name="Brenner S.E."/>
            <person name="Batalov S."/>
            <person name="Forrest A.R."/>
            <person name="Zavolan M."/>
            <person name="Davis M.J."/>
            <person name="Wilming L.G."/>
            <person name="Aidinis V."/>
            <person name="Allen J.E."/>
            <person name="Ambesi-Impiombato A."/>
            <person name="Apweiler R."/>
            <person name="Aturaliya R.N."/>
            <person name="Bailey T.L."/>
            <person name="Bansal M."/>
            <person name="Baxter L."/>
            <person name="Beisel K.W."/>
            <person name="Bersano T."/>
            <person name="Bono H."/>
            <person name="Chalk A.M."/>
            <person name="Chiu K.P."/>
            <person name="Choudhary V."/>
            <person name="Christoffels A."/>
            <person name="Clutterbuck D.R."/>
            <person name="Crowe M.L."/>
            <person name="Dalla E."/>
            <person name="Dalrymple B.P."/>
            <person name="de Bono B."/>
            <person name="Della Gatta G."/>
            <person name="di Bernardo D."/>
            <person name="Down T."/>
            <person name="Engstrom P."/>
            <person name="Fagiolini M."/>
            <person name="Faulkner G."/>
            <person name="Fletcher C.F."/>
            <person name="Fukushima T."/>
            <person name="Furuno M."/>
            <person name="Futaki S."/>
            <person name="Gariboldi M."/>
            <person name="Georgii-Hemming P."/>
            <person name="Gingeras T.R."/>
            <person name="Gojobori T."/>
            <person name="Green R.E."/>
            <person name="Gustincich S."/>
            <person name="Harbers M."/>
            <person name="Hayashi Y."/>
            <person name="Hensch T.K."/>
            <person name="Hirokawa N."/>
            <person name="Hill D."/>
            <person name="Huminiecki L."/>
            <person name="Iacono M."/>
            <person name="Ikeo K."/>
            <person name="Iwama A."/>
            <person name="Ishikawa T."/>
            <person name="Jakt M."/>
            <person name="Kanapin A."/>
            <person name="Katoh M."/>
            <person name="Kawasawa Y."/>
            <person name="Kelso J."/>
            <person name="Kitamura H."/>
            <person name="Kitano H."/>
            <person name="Kollias G."/>
            <person name="Krishnan S.P."/>
            <person name="Kruger A."/>
            <person name="Kummerfeld S.K."/>
            <person name="Kurochkin I.V."/>
            <person name="Lareau L.F."/>
            <person name="Lazarevic D."/>
            <person name="Lipovich L."/>
            <person name="Liu J."/>
            <person name="Liuni S."/>
            <person name="McWilliam S."/>
            <person name="Madan Babu M."/>
            <person name="Madera M."/>
            <person name="Marchionni L."/>
            <person name="Matsuda H."/>
            <person name="Matsuzawa S."/>
            <person name="Miki H."/>
            <person name="Mignone F."/>
            <person name="Miyake S."/>
            <person name="Morris K."/>
            <person name="Mottagui-Tabar S."/>
            <person name="Mulder N."/>
            <person name="Nakano N."/>
            <person name="Nakauchi H."/>
            <person name="Ng P."/>
            <person name="Nilsson R."/>
            <person name="Nishiguchi S."/>
            <person name="Nishikawa S."/>
            <person name="Nori F."/>
            <person name="Ohara O."/>
            <person name="Okazaki Y."/>
            <person name="Orlando V."/>
            <person name="Pang K.C."/>
            <person name="Pavan W.J."/>
            <person name="Pavesi G."/>
            <person name="Pesole G."/>
            <person name="Petrovsky N."/>
            <person name="Piazza S."/>
            <person name="Reed J."/>
            <person name="Reid J.F."/>
            <person name="Ring B.Z."/>
            <person name="Ringwald M."/>
            <person name="Rost B."/>
            <person name="Ruan Y."/>
            <person name="Salzberg S.L."/>
            <person name="Sandelin A."/>
            <person name="Schneider C."/>
            <person name="Schoenbach C."/>
            <person name="Sekiguchi K."/>
            <person name="Semple C.A."/>
            <person name="Seno S."/>
            <person name="Sessa L."/>
            <person name="Sheng Y."/>
            <person name="Shibata Y."/>
            <person name="Shimada H."/>
            <person name="Shimada K."/>
            <person name="Silva D."/>
            <person name="Sinclair B."/>
            <person name="Sperling S."/>
            <person name="Stupka E."/>
            <person name="Sugiura K."/>
            <person name="Sultana R."/>
            <person name="Takenaka Y."/>
            <person name="Taki K."/>
            <person name="Tammoja K."/>
            <person name="Tan S.L."/>
            <person name="Tang S."/>
            <person name="Taylor M.S."/>
            <person name="Tegner J."/>
            <person name="Teichmann S.A."/>
            <person name="Ueda H.R."/>
            <person name="van Nimwegen E."/>
            <person name="Verardo R."/>
            <person name="Wei C.L."/>
            <person name="Yagi K."/>
            <person name="Yamanishi H."/>
            <person name="Zabarovsky E."/>
            <person name="Zhu S."/>
            <person name="Zimmer A."/>
            <person name="Hide W."/>
            <person name="Bult C."/>
            <person name="Grimmond S.M."/>
            <person name="Teasdale R.D."/>
            <person name="Liu E.T."/>
            <person name="Brusic V."/>
            <person name="Quackenbush J."/>
            <person name="Wahlestedt C."/>
            <person name="Mattick J.S."/>
            <person name="Hume D.A."/>
            <person name="Kai C."/>
            <person name="Sasaki D."/>
            <person name="Tomaru Y."/>
            <person name="Fukuda S."/>
            <person name="Kanamori-Katayama M."/>
            <person name="Suzuki M."/>
            <person name="Aoki J."/>
            <person name="Arakawa T."/>
            <person name="Iida J."/>
            <person name="Imamura K."/>
            <person name="Itoh M."/>
            <person name="Kato T."/>
            <person name="Kawaji H."/>
            <person name="Kawagashira N."/>
            <person name="Kawashima T."/>
            <person name="Kojima M."/>
            <person name="Kondo S."/>
            <person name="Konno H."/>
            <person name="Nakano K."/>
            <person name="Ninomiya N."/>
            <person name="Nishio T."/>
            <person name="Okada M."/>
            <person name="Plessy C."/>
            <person name="Shibata K."/>
            <person name="Shiraki T."/>
            <person name="Suzuki S."/>
            <person name="Tagami M."/>
            <person name="Waki K."/>
            <person name="Watahiki A."/>
            <person name="Okamura-Oho Y."/>
            <person name="Suzuki H."/>
            <person name="Kawai J."/>
            <person name="Hayashizaki Y."/>
        </authorList>
    </citation>
    <scope>NUCLEOTIDE SEQUENCE [LARGE SCALE MRNA]</scope>
    <source>
        <strain>C57BL/6J</strain>
        <strain>NOD</strain>
        <tissue>Thymus</tissue>
        <tissue>Vagina</tissue>
    </source>
</reference>
<reference key="4">
    <citation type="submission" date="2005-07" db="EMBL/GenBank/DDBJ databases">
        <authorList>
            <person name="Mural R.J."/>
            <person name="Adams M.D."/>
            <person name="Myers E.W."/>
            <person name="Smith H.O."/>
            <person name="Venter J.C."/>
        </authorList>
    </citation>
    <scope>NUCLEOTIDE SEQUENCE [LARGE SCALE GENOMIC DNA]</scope>
</reference>
<reference key="5">
    <citation type="journal article" date="2002" name="Nat. Genet.">
        <title>Regulation of insulin action and pancreatic beta-cell function by mutated alleles of the gene encoding forkhead transcription factor Foxo1.</title>
        <authorList>
            <person name="Nakae J."/>
            <person name="Biggs W.H. III"/>
            <person name="Kitamura T."/>
            <person name="Cavenee W.K."/>
            <person name="Wright C.V."/>
            <person name="Arden K.C."/>
            <person name="Accili D."/>
        </authorList>
    </citation>
    <scope>FUNCTION</scope>
</reference>
<reference key="6">
    <citation type="journal article" date="2003" name="Nature">
        <title>Insulin-regulated hepatic gluconeogenesis through FOXO1-PGC-1alpha interaction.</title>
        <authorList>
            <person name="Puigserver P."/>
            <person name="Rhee J."/>
            <person name="Donovan J."/>
            <person name="Walkey C.J."/>
            <person name="Yoon J.C."/>
            <person name="Oriente F."/>
            <person name="Kitamura Y."/>
            <person name="Altomonte J."/>
            <person name="Dong H."/>
            <person name="Accili D."/>
            <person name="Spiegelman B.M."/>
        </authorList>
    </citation>
    <scope>INTERACTION WITH PPARGC1A</scope>
    <scope>FUNCTION</scope>
    <scope>PHOSPHORYLATION</scope>
</reference>
<reference key="7">
    <citation type="journal article" date="2004" name="J. Biol. Chem.">
        <title>Abnormal angiogenesis in Foxo1 (Fkhr)-deficient mice.</title>
        <authorList>
            <person name="Furuyama T."/>
            <person name="Kitayama K."/>
            <person name="Shimoda Y."/>
            <person name="Ogawa M."/>
            <person name="Sone K."/>
            <person name="Yoshida-Araki K."/>
            <person name="Hisatsune H."/>
            <person name="Nishikawa S."/>
            <person name="Nakayama K."/>
            <person name="Nakayama K."/>
            <person name="Ikeda K."/>
            <person name="Motoyama N."/>
            <person name="Mori N."/>
        </authorList>
    </citation>
    <scope>DISRUPTION PHENOTYPE</scope>
    <scope>FUNCTION</scope>
</reference>
<reference key="8">
    <citation type="journal article" date="2004" name="Proc. Natl. Acad. Sci. U.S.A.">
        <title>Silent information regulator 2 potentiates Foxo1-mediated transcription through its deacetylase activity.</title>
        <authorList>
            <person name="Daitoku H."/>
            <person name="Hatta M."/>
            <person name="Matsuzaki H."/>
            <person name="Aratani S."/>
            <person name="Ohshima T."/>
            <person name="Miyagishi M."/>
            <person name="Nakajima T."/>
            <person name="Fukamizu A."/>
        </authorList>
    </citation>
    <scope>ACETYLATION AT LYS-242; LYS-245 AND LYS-262</scope>
    <scope>INTERACTION WITH SIRT1</scope>
    <scope>DEACETYLATION</scope>
    <scope>FUNCTION</scope>
    <scope>MUTAGENESIS OF LYS-242; LYS-245 AND LYS-262</scope>
</reference>
<reference key="9">
    <citation type="journal article" date="2005" name="Proc. Natl. Acad. Sci. U.S.A.">
        <title>Acetylation of Foxo1 alters its DNA-binding ability and sensitivity to phosphorylation.</title>
        <authorList>
            <person name="Matsuzaki H."/>
            <person name="Daitoku H."/>
            <person name="Hatta M."/>
            <person name="Aoyama H."/>
            <person name="Yoshimochi K."/>
            <person name="Fukamizu A."/>
        </authorList>
    </citation>
    <scope>ACETYLATION AT LYS-242; LYS-245 AND LYS-262</scope>
    <scope>PHOSPHORYLATION AT SER-253</scope>
    <scope>DNA-BINDING</scope>
    <scope>MUTAGENESIS OF LYS-242; LYS-245; SER-253 AND LYS-262</scope>
</reference>
<reference key="10">
    <citation type="journal article" date="2006" name="Genes Dev.">
        <title>Defects in energy homeostasis in Leigh syndrome French Canadian variant through PGC-1alpha/LRP130 complex.</title>
        <authorList>
            <person name="Cooper M.P."/>
            <person name="Qu L."/>
            <person name="Rohas L.M."/>
            <person name="Lin J."/>
            <person name="Yang W."/>
            <person name="Erdjument-Bromage H."/>
            <person name="Tempst P."/>
            <person name="Spiegelman B.M."/>
        </authorList>
    </citation>
    <scope>INTERACTION WITH LRPPRC</scope>
</reference>
<reference key="11">
    <citation type="journal article" date="2006" name="J. Biol. Chem.">
        <title>SIRT1 regulates adiponectin gene expression through Foxo1-C/enhancer-binding protein alpha transcriptional complex.</title>
        <authorList>
            <person name="Qiao L."/>
            <person name="Shao J."/>
        </authorList>
    </citation>
    <scope>FUNCTION</scope>
    <scope>INTERACTION WITH CEBPA</scope>
    <scope>ACETYLATION AT LYS-242; LYS-245 AND LYS-262</scope>
    <scope>DEACETYLATION BY SIRT1</scope>
    <scope>DNA-BINDING</scope>
    <scope>MUTAGENESIS OF LYS-242; LYS-245 AND LYS-262</scope>
</reference>
<reference key="12">
    <citation type="journal article" date="2006" name="J. Clin. Invest.">
        <title>The LXXLL motif of murine forkhead transcription factor FoxO1 mediates Sirt1-dependent transcriptional activity.</title>
        <authorList>
            <person name="Nakae J."/>
            <person name="Cao Y."/>
            <person name="Daitoku H."/>
            <person name="Fukamizu A."/>
            <person name="Ogawa W."/>
            <person name="Yano Y."/>
            <person name="Hayashi Y."/>
        </authorList>
    </citation>
    <scope>INTERACTION WITH SIRT1</scope>
    <scope>PHOSPHORYLATION</scope>
    <scope>SUBCELLULAR LOCATION</scope>
    <scope>FUNCTION</scope>
    <scope>MUTAGENESIS OF THR-24; SER-253; SER-316; LEU-462 AND LEU-463</scope>
</reference>
<reference key="13">
    <citation type="journal article" date="2007" name="Cell Metab.">
        <title>SIRT2 regulates adipocyte differentiation through FoxO1 acetylation/deacetylation.</title>
        <authorList>
            <person name="Jing E."/>
            <person name="Gesta S."/>
            <person name="Kahn C.R."/>
        </authorList>
    </citation>
    <scope>ACETYLATION</scope>
    <scope>DEACETYLATION BY SIRT2</scope>
    <scope>FUNCTION IN INHIBITION OF ADIPOCYTE DIFFERENTIATION</scope>
    <scope>INTERACTION WITH SIRT2</scope>
</reference>
<reference key="14">
    <citation type="journal article" date="2007" name="EMBO J.">
        <title>Foxo1 links insulin signaling to C/EBPalpha and regulates gluconeogenesis during liver development.</title>
        <authorList>
            <person name="Sekine K."/>
            <person name="Chen Y.R."/>
            <person name="Kojima N."/>
            <person name="Ogata K."/>
            <person name="Fukamizu A."/>
            <person name="Miyajima A."/>
        </authorList>
    </citation>
    <scope>FUNCTION</scope>
    <scope>INTERACTION WITH CEBPA</scope>
    <scope>DEVELOPMENTAL STAGE</scope>
    <scope>TISSUE SPECIFICITY</scope>
    <scope>SUBCELLULAR LOCATION</scope>
    <scope>MUTAGENESIS OF TRP-206 AND HIS-212</scope>
</reference>
<reference key="15">
    <citation type="journal article" date="2007" name="Proc. Natl. Acad. Sci. U.S.A.">
        <title>Large-scale phosphorylation analysis of mouse liver.</title>
        <authorList>
            <person name="Villen J."/>
            <person name="Beausoleil S.A."/>
            <person name="Gerber S.A."/>
            <person name="Gygi S.P."/>
        </authorList>
    </citation>
    <scope>IDENTIFICATION BY MASS SPECTROMETRY [LARGE SCALE ANALYSIS]</scope>
    <source>
        <tissue>Liver</tissue>
    </source>
</reference>
<reference key="16">
    <citation type="journal article" date="2008" name="EMBO J.">
        <title>Akt- and Foxo1-interacting WD-repeat-FYVE protein promotes adipogenesis.</title>
        <authorList>
            <person name="Fritzius T."/>
            <person name="Moelling K."/>
        </authorList>
    </citation>
    <scope>INTERACTION WITH WDFY2</scope>
    <scope>COMPLEX FORMATION WITH WDFY2 AND AKT1</scope>
    <scope>SUBCELLULAR LOCATION</scope>
    <scope>INDUCTION</scope>
    <scope>PHOSPHORYLATION AT SER-253</scope>
</reference>
<reference key="17">
    <citation type="journal article" date="2008" name="Mol. Cell">
        <title>Arginine methylation of FOXO transcription factors inhibits their phosphorylation by Akt.</title>
        <authorList>
            <person name="Yamagata K."/>
            <person name="Daitoku H."/>
            <person name="Takahashi Y."/>
            <person name="Namiki K."/>
            <person name="Hisatake K."/>
            <person name="Kako K."/>
            <person name="Mukai H."/>
            <person name="Kasuya Y."/>
            <person name="Fukamizu A."/>
        </authorList>
    </citation>
    <scope>PHOSPHORYLATION</scope>
    <scope>SUBCELLULAR LOCATION</scope>
    <scope>METHYLATION AT ARG-248 AND ARG-250</scope>
    <scope>MUTAGENESIS OF ARG-29; ARG-147; ARG-154; ARG-248; ARG-249; ARG-250; ARG-311 AND ARG-313</scope>
</reference>
<reference key="18">
    <citation type="journal article" date="2009" name="Mol. Biol. Cell">
        <title>SIRT2 suppresses adipocyte differentiation by deacetylating FOXO1 and enhancing FOXO1's repressive interaction with PPARgamma.</title>
        <authorList>
            <person name="Wang F."/>
            <person name="Tong Q."/>
        </authorList>
    </citation>
    <scope>ACETYLATION</scope>
    <scope>DEACETYLATION BY SIRT2</scope>
    <scope>INTERACTION WITH PPARG AND SIRT2</scope>
    <scope>SUBCELLULAR LOCATION</scope>
</reference>
<reference key="19">
    <citation type="journal article" date="2010" name="Cell">
        <title>A tissue-specific atlas of mouse protein phosphorylation and expression.</title>
        <authorList>
            <person name="Huttlin E.L."/>
            <person name="Jedrychowski M.P."/>
            <person name="Elias J.E."/>
            <person name="Goswami T."/>
            <person name="Rad R."/>
            <person name="Beausoleil S.A."/>
            <person name="Villen J."/>
            <person name="Haas W."/>
            <person name="Sowa M.E."/>
            <person name="Gygi S.P."/>
        </authorList>
    </citation>
    <scope>PHOSPHORYLATION [LARGE SCALE ANALYSIS] AT SER-284; SER-295; SER-326 AND THR-330</scope>
    <scope>IDENTIFICATION BY MASS SPECTROMETRY [LARGE SCALE ANALYSIS]</scope>
    <source>
        <tissue>Brain</tissue>
        <tissue>Brown adipose tissue</tissue>
        <tissue>Kidney</tissue>
        <tissue>Liver</tissue>
        <tissue>Lung</tissue>
        <tissue>Pancreas</tissue>
        <tissue>Spleen</tissue>
        <tissue>Testis</tissue>
    </source>
</reference>
<reference key="20">
    <citation type="journal article" date="2010" name="J. Biol. Chem.">
        <title>Regulation of FOXO1 by TAK1-Nemo-like kinase pathway.</title>
        <authorList>
            <person name="Kim S."/>
            <person name="Kim Y."/>
            <person name="Lee J."/>
            <person name="Chung J."/>
        </authorList>
    </citation>
    <scope>INTERACTION WITH NLK</scope>
    <scope>SUBCELLULAR LOCATION</scope>
    <scope>PHOSPHORYLATION BY NLK</scope>
    <scope>MUTAGENESIS OF SER-284; SER-295; SER-326; SER-380; SER-391; THR-399; SER-413 AND SER-415</scope>
</reference>
<reference key="21">
    <citation type="journal article" date="2010" name="J. Biol. Chem.">
        <title>Uncoupling of acetylation from phosphorylation regulates FoxO1 function independent of its subcellular localization.</title>
        <authorList>
            <person name="Qiang L."/>
            <person name="Banks A.S."/>
            <person name="Accili D."/>
        </authorList>
    </citation>
    <scope>PHOSPHORYLATION AT THR-24 AND SER-253</scope>
    <scope>ACETYLATION</scope>
    <scope>SUBCELLULAR LOCATION</scope>
    <scope>FUNCTION</scope>
    <scope>MUTAGENESIS OF THR-24; LYS-219; LYS-242; LYS-245; SER-253; LYS-259; LYS-262; LYS-271 AND LYS-291</scope>
</reference>
<reference key="22">
    <citation type="journal article" date="2010" name="Mol. Endocrinol.">
        <title>Serum- and glucocorticoid-inducible kinase 1 (SGK1) regulates adipocyte differentiation via forkhead box O1.</title>
        <authorList>
            <person name="Di Pietro N."/>
            <person name="Panel V."/>
            <person name="Hayes S."/>
            <person name="Bagattin A."/>
            <person name="Meruvu S."/>
            <person name="Pandolfi A."/>
            <person name="Hugendubler L."/>
            <person name="Fejes-Toth G."/>
            <person name="Naray-Fejes-Toth A."/>
            <person name="Mueller E."/>
        </authorList>
    </citation>
    <scope>PHOSPHORYLATION AT THR-24; SER-253 AND SER-319 BY SGK1</scope>
    <scope>SUBCELLULAR LOCATION</scope>
</reference>
<reference key="23">
    <citation type="journal article" date="2010" name="PLoS ONE">
        <title>KRIT1 regulates the homeostasis of intracellular reactive oxygen species.</title>
        <authorList>
            <person name="Goitre L."/>
            <person name="Balzac F."/>
            <person name="Degani S."/>
            <person name="Degan P."/>
            <person name="Marchi S."/>
            <person name="Pinton P."/>
            <person name="Retta S.F."/>
        </authorList>
    </citation>
    <scope>FUNCTION</scope>
    <scope>PHOSPHORYLATION</scope>
    <scope>INTERACTION WITH SIRT1</scope>
    <scope>INDUCTION</scope>
</reference>
<reference key="24">
    <citation type="journal article" date="2011" name="J. Biol. Chem.">
        <title>FoxO1 and SIRT1 regulate beta-cell responses to nitric oxide.</title>
        <authorList>
            <person name="Hughes K.J."/>
            <person name="Meares G.P."/>
            <person name="Hansen P.A."/>
            <person name="Corbett J.A."/>
        </authorList>
    </citation>
    <scope>FUNCTION</scope>
    <scope>SUBCELLULAR LOCATION</scope>
    <scope>ACETYLATION</scope>
    <scope>RESPONSE TO NITRIC OXIDE</scope>
</reference>
<reference key="25">
    <citation type="journal article" date="2011" name="J. Biol. Chem.">
        <title>Nucleo-cytosolic shuttling of FoxO1 directly regulates mouse Ins2 but not Ins1 gene expression in pancreatic beta cells (MIN6).</title>
        <authorList>
            <person name="Meur G."/>
            <person name="Qian Q."/>
            <person name="da Silva Xavier G."/>
            <person name="Pullen T.J."/>
            <person name="Tsuboi T."/>
            <person name="McKinnon C."/>
            <person name="Fletcher L."/>
            <person name="Tavare J.M."/>
            <person name="Hughes S."/>
            <person name="Johnson P."/>
            <person name="Rutter G.A."/>
        </authorList>
    </citation>
    <scope>SUBCELLULAR LOCATION</scope>
    <scope>FUNCTION</scope>
    <scope>DNA-BINDING</scope>
</reference>
<reference key="26">
    <citation type="journal article" date="2011" name="J. Biol. Chem.">
        <title>Foxo1 mediates insulin-like growth factor 1 (IGF1)/insulin regulation of osteocalcin expression by antagonizing Runx2 in osteoblasts.</title>
        <authorList>
            <person name="Yang S."/>
            <person name="Xu H."/>
            <person name="Yu S."/>
            <person name="Cao H."/>
            <person name="Fan J."/>
            <person name="Ge C."/>
            <person name="Fransceschi R.T."/>
            <person name="Dong H.H."/>
            <person name="Xiao G."/>
        </authorList>
    </citation>
    <scope>INTERACTION WITH RUNX2</scope>
    <scope>FUNCTION</scope>
</reference>
<reference key="27">
    <citation type="journal article" date="2011" name="Nat. Med.">
        <title>Regulation of glucose homeostasis through a XBP-1-FoxO1 interaction.</title>
        <authorList>
            <person name="Zhou Y."/>
            <person name="Lee J."/>
            <person name="Reno C.M."/>
            <person name="Sun C."/>
            <person name="Park S.W."/>
            <person name="Chung J."/>
            <person name="Lee J."/>
            <person name="Fisher S.J."/>
            <person name="White M.F."/>
            <person name="Biddinger S.B."/>
            <person name="Ozcan U."/>
        </authorList>
    </citation>
    <scope>INTERACTION WITH XBP1</scope>
    <scope>SUBCELLULAR LOCATION</scope>
</reference>
<reference key="28">
    <citation type="journal article" date="2012" name="Biochem. J.">
        <title>The B55alpha-containing PP2A holoenzyme dephosphorylates FOXO1 in islet beta-cells under oxidative stress.</title>
        <authorList>
            <person name="Yan L."/>
            <person name="Guo S."/>
            <person name="Brault M."/>
            <person name="Harmon J."/>
            <person name="Robertson R.P."/>
            <person name="Hamid R."/>
            <person name="Stein R."/>
            <person name="Yang E."/>
        </authorList>
    </citation>
    <scope>CHARACTERISTICS OF AN ANIMAL MODEL OF DIABETES MELLITUS TYPE 2</scope>
    <scope>FUNCTION</scope>
    <scope>DEPHOSPHORYLATION AT THR-24 AND SER-253</scope>
    <scope>INTERACTION WITH PPP2R1A</scope>
</reference>
<reference key="29">
    <citation type="journal article" date="2012" name="EMBO J.">
        <title>Novel repressor regulates insulin sensitivity through interaction with Foxo1.</title>
        <authorList>
            <person name="Nakae J."/>
            <person name="Cao Y."/>
            <person name="Hakuno F."/>
            <person name="Takemori H."/>
            <person name="Kawano Y."/>
            <person name="Sekioka R."/>
            <person name="Abe T."/>
            <person name="Kiyonari H."/>
            <person name="Tanaka T."/>
            <person name="Sakai J."/>
            <person name="Takahashi S."/>
            <person name="Itoh H."/>
        </authorList>
    </citation>
    <scope>FUNCTION AS A TRANSCRIPTIONAL ACTIVATOR</scope>
    <scope>INTERACTION WITH FCOR AND SIRT1</scope>
    <scope>TISSUE SPECIFICITY</scope>
    <scope>MUTAGENESIS OF LYS-242; LYS-245; LYS-259; LYS-262; LYS-271 AND LYS-291</scope>
</reference>
<reference key="30">
    <citation type="journal article" date="2012" name="J. Biol. Chem.">
        <title>FoxO1 protein cooperates with ATF4 protein in osteoblasts to control glucose homeostasis.</title>
        <authorList>
            <person name="Kode A."/>
            <person name="Mosialou I."/>
            <person name="Silva B.C."/>
            <person name="Joshi S."/>
            <person name="Ferron M."/>
            <person name="Rached M.T."/>
            <person name="Kousteni S."/>
        </authorList>
    </citation>
    <scope>DISRUPTION PHENOTYPE</scope>
    <scope>SUBCELLULAR LOCATION</scope>
    <scope>INTERACTION WITH ATF4</scope>
    <scope>FUNCTION</scope>
</reference>
<reference key="31">
    <citation type="journal article" date="2014" name="Proc. Natl. Acad. Sci. U.S.A.">
        <title>Tumor suppressor p53 cooperates with SIRT6 to regulate gluconeogenesis by promoting FoxO1 nuclear exclusion.</title>
        <authorList>
            <person name="Zhang P."/>
            <person name="Tu B."/>
            <person name="Wang H."/>
            <person name="Cao Z."/>
            <person name="Tang M."/>
            <person name="Zhang C."/>
            <person name="Gu B."/>
            <person name="Li Z."/>
            <person name="Wang L."/>
            <person name="Yang Y."/>
            <person name="Zhao Y."/>
            <person name="Wang H."/>
            <person name="Luo J."/>
            <person name="Deng C.X."/>
            <person name="Gao B."/>
            <person name="Roeder R.G."/>
            <person name="Zhu W.G."/>
        </authorList>
    </citation>
    <scope>FUNCTION</scope>
    <scope>ACETYLATION</scope>
</reference>
<reference key="32">
    <citation type="journal article" date="2016" name="Nat. Commun.">
        <title>Control of diabetic hyperglycaemia and insulin resistance through TSC22D4.</title>
        <authorList>
            <person name="Ekim Uestuenel B."/>
            <person name="Friedrich K."/>
            <person name="Maida A."/>
            <person name="Wang X."/>
            <person name="Krones-Herzig A."/>
            <person name="Seibert O."/>
            <person name="Sommerfeld A."/>
            <person name="Jones A."/>
            <person name="Sijmonsma T.P."/>
            <person name="Sticht C."/>
            <person name="Gretz N."/>
            <person name="Fleming T."/>
            <person name="Nawroth P.P."/>
            <person name="Stremmel W."/>
            <person name="Rose A.J."/>
            <person name="Berriel-Diaz M."/>
            <person name="Blueher M."/>
            <person name="Herzig S."/>
        </authorList>
    </citation>
    <scope>TISSUE SPECIFICITY</scope>
    <scope>PHOSPHORYLATION AT SER-253</scope>
</reference>
<reference key="33">
    <citation type="journal article" date="2016" name="Sci. Rep.">
        <title>Insulin secretion impairment in Sirt6 knockout pancreatic beta cells is mediated by suppression of the FoxO1-Pdx1-Glut2 pathway.</title>
        <authorList>
            <person name="Song M.Y."/>
            <person name="Wang J."/>
            <person name="Ka S.O."/>
            <person name="Bae E.J."/>
            <person name="Park B.H."/>
        </authorList>
    </citation>
    <scope>FUNCTION</scope>
    <scope>SUBCELLULAR LOCATION</scope>
    <scope>DEACETYLATION BY SIRT6</scope>
</reference>
<reference key="34">
    <citation type="journal article" date="2017" name="Diabetes">
        <title>DDB1-mediated CRY1 degradation promotes FOXO1-driven gluconeogenesis in liver.</title>
        <authorList>
            <person name="Tong X."/>
            <person name="Zhang D."/>
            <person name="Charney N."/>
            <person name="Jin E."/>
            <person name="VanDommelen K."/>
            <person name="Stamper K."/>
            <person name="Gupta N."/>
            <person name="Saldate J."/>
            <person name="Yin L."/>
        </authorList>
    </citation>
    <scope>INTERACTION WITH CRY1</scope>
    <scope>UBIQUITINATION AND PROTEASOMAL DEGRADATION</scope>
    <scope>SUBCELLULAR LOCATION</scope>
</reference>
<reference key="35">
    <citation type="journal article" date="2019" name="Mol. Cell">
        <title>Non-canonical mTORC2 signaling regulates brown adipocyte lipid catabolism through SIRT6-FoxO1.</title>
        <authorList>
            <person name="Jung S.M."/>
            <person name="Hung C.M."/>
            <person name="Hildebrand S.R."/>
            <person name="Sanchez-Gurmaches J."/>
            <person name="Martinez-Pastor B."/>
            <person name="Gengatharan J.M."/>
            <person name="Wallace M."/>
            <person name="Mukhopadhyay D."/>
            <person name="Martinez Calejman C."/>
            <person name="Luciano A.K."/>
            <person name="Hsiao W.Y."/>
            <person name="Tang Y."/>
            <person name="Li H."/>
            <person name="Daniels D.L."/>
            <person name="Mostoslavsky R."/>
            <person name="Metallo C.M."/>
            <person name="Guertin D.A."/>
        </authorList>
    </citation>
    <scope>DEACETYLATION BY SIRT6</scope>
</reference>
<reference key="36">
    <citation type="journal article" date="2020" name="Nature">
        <title>Lipid availability determines fate of skeletal progenitor cells via SOX9.</title>
        <authorList>
            <person name="van Gastel N."/>
            <person name="Stegen S."/>
            <person name="Eelen G."/>
            <person name="Schoors S."/>
            <person name="Carlier A."/>
            <person name="Daniels V.W."/>
            <person name="Baryawno N."/>
            <person name="Przybylski D."/>
            <person name="Depypere M."/>
            <person name="Stiers P.J."/>
            <person name="Lambrechts D."/>
            <person name="Van Looveren R."/>
            <person name="Torrekens S."/>
            <person name="Sharda A."/>
            <person name="Agostinis P."/>
            <person name="Lambrechts D."/>
            <person name="Maes F."/>
            <person name="Swinnen J.V."/>
            <person name="Geris L."/>
            <person name="Van Oosterwyck H."/>
            <person name="Thienpont B."/>
            <person name="Carmeliet P."/>
            <person name="Scadden D.T."/>
            <person name="Carmeliet G."/>
        </authorList>
    </citation>
    <scope>FUNCTION</scope>
    <scope>SUBCELLULAR LOCATION</scope>
</reference>
<reference key="37">
    <citation type="journal article" date="2022" name="Cell Metab.">
        <title>TOX4, an insulin receptor-independent regulator of hepatic glucose production, is activated in diabetic liver.</title>
        <authorList>
            <person name="Wang L."/>
            <person name="Yu J."/>
            <person name="Zhou Q."/>
            <person name="Wang X."/>
            <person name="Mukhanova M."/>
            <person name="Du W."/>
            <person name="Sun L."/>
            <person name="Pajvani U.B."/>
            <person name="Accili D."/>
        </authorList>
    </citation>
    <scope>FUNCTION</scope>
    <scope>INTERACTION WITH TOX4</scope>
</reference>
<protein>
    <recommendedName>
        <fullName>Forkhead box protein O1</fullName>
    </recommendedName>
    <alternativeName>
        <fullName>Forkhead box protein O1A</fullName>
    </alternativeName>
    <alternativeName>
        <fullName>Forkhead in rhabdomyosarcoma</fullName>
    </alternativeName>
</protein>
<accession>Q9R1E0</accession>
<accession>Q9JJW4</accession>
<feature type="chain" id="PRO_0000091873" description="Forkhead box protein O1">
    <location>
        <begin position="1"/>
        <end position="652"/>
    </location>
</feature>
<feature type="DNA-binding region" description="Fork-head" evidence="5">
    <location>
        <begin position="156"/>
        <end position="232"/>
    </location>
</feature>
<feature type="region of interest" description="Disordered" evidence="6">
    <location>
        <begin position="1"/>
        <end position="62"/>
    </location>
</feature>
<feature type="region of interest" description="Disordered" evidence="6">
    <location>
        <begin position="112"/>
        <end position="154"/>
    </location>
</feature>
<feature type="region of interest" description="DNA-binding" evidence="4">
    <location>
        <begin position="208"/>
        <end position="215"/>
    </location>
</feature>
<feature type="region of interest" description="Disordered" evidence="6">
    <location>
        <begin position="231"/>
        <end position="342"/>
    </location>
</feature>
<feature type="region of interest" description="DNA-binding" evidence="4">
    <location>
        <begin position="231"/>
        <end position="234"/>
    </location>
</feature>
<feature type="region of interest" description="Sufficient for interaction with NLK" evidence="22">
    <location>
        <begin position="280"/>
        <end position="562"/>
    </location>
</feature>
<feature type="region of interest" description="Required for interaction with RUNX2" evidence="28">
    <location>
        <begin position="360"/>
        <end position="456"/>
    </location>
</feature>
<feature type="region of interest" description="Disordered" evidence="6">
    <location>
        <begin position="383"/>
        <end position="410"/>
    </location>
</feature>
<feature type="short sequence motif" description="Nuclear localization signal" evidence="1">
    <location>
        <begin position="248"/>
        <end position="250"/>
    </location>
</feature>
<feature type="short sequence motif" description="Required for interaction with SIRT1" evidence="11">
    <location>
        <begin position="459"/>
        <end position="463"/>
    </location>
</feature>
<feature type="compositionally biased region" description="Low complexity" evidence="6">
    <location>
        <begin position="35"/>
        <end position="62"/>
    </location>
</feature>
<feature type="compositionally biased region" description="Pro residues" evidence="6">
    <location>
        <begin position="114"/>
        <end position="133"/>
    </location>
</feature>
<feature type="compositionally biased region" description="Low complexity" evidence="6">
    <location>
        <begin position="134"/>
        <end position="146"/>
    </location>
</feature>
<feature type="compositionally biased region" description="Basic residues" evidence="6">
    <location>
        <begin position="261"/>
        <end position="272"/>
    </location>
</feature>
<feature type="compositionally biased region" description="Polar residues" evidence="6">
    <location>
        <begin position="306"/>
        <end position="323"/>
    </location>
</feature>
<feature type="compositionally biased region" description="Polar residues" evidence="6">
    <location>
        <begin position="392"/>
        <end position="401"/>
    </location>
</feature>
<feature type="site" description="DNA-binding" evidence="4">
    <location>
        <position position="155"/>
    </location>
</feature>
<feature type="site" description="DNA-binding" evidence="4">
    <location>
        <position position="162"/>
    </location>
</feature>
<feature type="site" description="DNA-binding" evidence="4">
    <location>
        <position position="222"/>
    </location>
</feature>
<feature type="modified residue" description="Phosphothreonine; by PKB/AKT1 or PKB/AKT2 and SGK1" evidence="7 21 23">
    <location>
        <position position="24"/>
    </location>
</feature>
<feature type="modified residue" description="Phosphoserine; by STK4/MST1" evidence="4">
    <location>
        <position position="209"/>
    </location>
</feature>
<feature type="modified residue" description="Phosphoserine" evidence="4">
    <location>
        <position position="215"/>
    </location>
</feature>
<feature type="modified residue" description="Phosphoserine" evidence="4">
    <location>
        <position position="231"/>
    </location>
</feature>
<feature type="modified residue" description="Phosphoserine" evidence="4">
    <location>
        <position position="232"/>
    </location>
</feature>
<feature type="modified residue" description="N6-acetyllysine" evidence="11 12 15">
    <location>
        <position position="242"/>
    </location>
</feature>
<feature type="modified residue" description="N6-acetyllysine" evidence="11 12 15">
    <location>
        <position position="245"/>
    </location>
</feature>
<feature type="modified residue" description="Phosphoserine; by CDK1" evidence="4">
    <location>
        <position position="246"/>
    </location>
</feature>
<feature type="modified residue" description="Omega-N-methylarginine; by PRMT1" evidence="19">
    <location>
        <position position="248"/>
    </location>
</feature>
<feature type="modified residue" description="Omega-N-methylarginine; by PRMT1" evidence="19">
    <location>
        <position position="250"/>
    </location>
</feature>
<feature type="modified residue" description="Phosphoserine; by PKB/AKT1 and SGK1" evidence="7 12 18 21 23 34">
    <location>
        <position position="253"/>
    </location>
</feature>
<feature type="modified residue" description="N6-acetyllysine" evidence="4">
    <location>
        <position position="259"/>
    </location>
</feature>
<feature type="modified residue" description="N6-acetyllysine" evidence="11 12 15">
    <location>
        <position position="262"/>
    </location>
</feature>
<feature type="modified residue" description="N6-acetyllysine" evidence="4">
    <location>
        <position position="271"/>
    </location>
</feature>
<feature type="modified residue" description="Phosphoserine" evidence="40">
    <location>
        <position position="284"/>
    </location>
</feature>
<feature type="modified residue" description="Phosphoserine" evidence="40">
    <location>
        <position position="295"/>
    </location>
</feature>
<feature type="modified residue" description="Phosphoserine; by PKB/AKT1 or PKB/AKT2" evidence="7">
    <location>
        <position position="316"/>
    </location>
</feature>
<feature type="modified residue" description="Phosphoserine; by CK1 and SGK1" evidence="21">
    <location>
        <position position="319"/>
    </location>
</feature>
<feature type="modified residue" description="Phosphoserine; by CK1" evidence="4">
    <location>
        <position position="322"/>
    </location>
</feature>
<feature type="modified residue" description="Phosphoserine" evidence="40">
    <location>
        <position position="326"/>
    </location>
</feature>
<feature type="modified residue" description="Phosphothreonine" evidence="40">
    <location>
        <position position="330"/>
    </location>
</feature>
<feature type="modified residue" description="N6-acetyllysine" evidence="4">
    <location>
        <position position="420"/>
    </location>
</feature>
<feature type="mutagenesis site" description="Decreases insulin-induced phosphorylation by approximately 30%. Nuclear location but transcriptional activity decreased by about 50%. Abolishes the SIRT1 deacetylase binding and increases acetylation; when associated with A-253; A-316; A-462 and A-463. Increased insulin-induced phosphorylation at Ser-253 and binding of 14-3-3 proteins; when associated with Q-219; Q-242; Q-245; Q-259; Q-262; Q-271 and Q-291. Increased binding of 14-3-3 proteins even with decreased insulin-induced phosphorylation at Ser-253; when associated with R-219; R-242; R-245; R-259; R-262; R-271 and R-291." evidence="7 13 23">
    <original>T</original>
    <variation>A</variation>
    <location>
        <position position="24"/>
    </location>
</feature>
<feature type="mutagenesis site" description="Little change in levels of methylation; when associated with K-147; K-154; K-311 and K-313." evidence="19">
    <original>R</original>
    <variation>K</variation>
    <location>
        <position position="29"/>
    </location>
</feature>
<feature type="mutagenesis site" description="Little change in levels of methylation; when associated with K-29; K-154; K-311 and K-313." evidence="19">
    <original>R</original>
    <variation>K</variation>
    <location>
        <position position="147"/>
    </location>
</feature>
<feature type="mutagenesis site" description="Little change in levels of methylation; when associated with K-29; K-147; K-311 and K-313." evidence="19">
    <original>R</original>
    <variation>K</variation>
    <location>
        <position position="154"/>
    </location>
</feature>
<feature type="mutagenesis site" description="Loss of interaction with CEBPA." evidence="16">
    <original>W</original>
    <variation>G</variation>
    <location>
        <position position="206"/>
    </location>
</feature>
<feature type="mutagenesis site" description="Loss of interaction with CEBPA." evidence="16">
    <original>H</original>
    <variation>P</variation>
    <location>
        <position position="212"/>
    </location>
</feature>
<feature type="mutagenesis site" description="Mimics acetylation. Cytoplasmic location in absence or presence of insulin, no change on the inhibitory effect of oxidative stress on insulin-induced phosphorylations, but no inhibition of these phosphorylations by resveratrol; when associated with Q-242; Q-245; Q-259; Q-262; Q-271 and Q-291. Increased insulin-induced phosphorylation at Ser-253 and binding of 14-3-3 proteins; when associated with A-24; Q-242; Q-245; Q-259; Q-262; Q-271 and Q-291." evidence="23">
    <original>K</original>
    <variation>Q</variation>
    <location>
        <position position="219"/>
    </location>
</feature>
<feature type="mutagenesis site" description="Translocates to the cytoplasm after insulin-stimulation. No change on the inhibitory effect of oxidative stress on insulin-induced phosphorylations, but no inhibition of these phosphorylations by resveratrol; when associated with R-242; R-245; R-259; R-262; R-271 and R-291. Increased binding of 14-3-3 proteins even with decreased insulin-induced phosphorylation at Ser-253; when associated with A-24; R-242; R-245; R-259; R-262; R-271 and R-291." evidence="23">
    <original>K</original>
    <variation>R</variation>
    <location>
        <position position="219"/>
    </location>
</feature>
<feature type="mutagenesis site" description="Mimics acetylation. Cytoplasmic location in absence or presence of insulin. Decreased DNA-binding by about half. Enhanced phosphorylation by PKB/AKT1, no effect on interaction with CEBPA; when associated with either A-245 or Q-245 and either A-262 or Q-262. either A-262 or Q-262. Cytoplasmic location in absence or presence of insulin, no change on the inhibitory effect of oxidative stress on insulin-induced phosphorylations, but no inhibition of these phosphorylations by resveratrol; when associated with Q-219; Q-245; Q-259; Q-262; Q-271 and Q-291. Increased insulin-induced phosphorylation at Ser-253 and binding of 14-3-3 proteins; when associated with A-24; Q-219; Q-245; Q-259; Q-262; Q-271 and Q-291." evidence="11 12 15 23 31">
    <original>K</original>
    <variation>Q</variation>
    <variation>A</variation>
    <location>
        <position position="242"/>
    </location>
</feature>
<feature type="mutagenesis site" description="Reduced acetylation and transcriptional activity increased by about 1.5 fold. Completely abolishes acetylation, increases interaction with CEBPA and transcriptional activity increased by about 3-fold; when associated with R-245 and R-262. Transcriptional activity not inhibited by FCOR; when associated with R-245; R-259; R-262; R-271 and R-291. Predominantly nuclear and translocates to the cytoplasm on insulin-stimulation. No change on the inhibitory effect of oxidative stress on insulin-induced phosphorylations, but no inhibition of these phosphorylations by resveratrol; when associated with R-219; R-245; R-259; R-262; R-271 and R-291. Increased binding of 14-3-3 proteins even with decreased insulin-induced phosphorylation at Ser-253; when associated with A-24; R-219; R-245; R-259; R-262; R-271 and R-291." evidence="11 12 15 23 31">
    <original>K</original>
    <variation>R</variation>
    <location>
        <position position="242"/>
    </location>
</feature>
<feature type="mutagenesis site" description="Mimics acetylation. Decreased DNA-binding by about half. Enhanced phosphorylation by PKB/AKT1, no effect on interaction with CEBPA; when associated with either A-242 or Q-242 and either A-262 or Q-262. Cytoplasmic location in absence or presence of insulin, no change on the inhibitory effect of oxidative stress on insulin-induced phosphorylations, but no inhibition of these phosphorylations by resveratrol; when associated with Q-219; Q-242; Q-259; Q-262; Q-271 and Q-291. Increased insulin-induced phosphorylation at Ser-253 and binding of 14-3-3 proteins; when associated with A-24; Q-219; Q-242; Q-259; Q-262; Q-271 and Q-291." evidence="11 12 15 23 31">
    <original>K</original>
    <variation>Q</variation>
    <variation>A</variation>
    <location>
        <position position="245"/>
    </location>
</feature>
<feature type="mutagenesis site" description="Reduced acetylation and transcriptional activity increased by about 1.5-fold. Completely abolishes acetylation, increases interaction with CEBPA and transcriptional activity increased by about 3-fold; when associated with R-242 and R-262. Transcriptional activity not inhibited by FCOR; when associated with R-242; R-259; R-262; R-271 and R-291. Predominantly nuclear and translocates to the cytoplasm on insulin-stimulation. No change on the inhibitory effect of oxidative stress on insulin-induced phosphorylations, but no inhibition of these phosphorylations by resveratrol; when associated with R-219; R-242; R-259; R-262; R-271 and R-291. Increased binding of 14-3-3 proteins even with decreased insulin-induced phosphorylation at Ser-253; when associated with A-24; R-219; R-242; R-259; R-262; R-271 and R-291." evidence="11 12 15 23 31">
    <original>K</original>
    <variation>R</variation>
    <location>
        <position position="245"/>
    </location>
</feature>
<feature type="mutagenesis site" description="Some decrease in levels of methylation. Greatly decreased methylation levels; when associated with K-250." evidence="19">
    <original>R</original>
    <variation>K</variation>
    <location>
        <position position="248"/>
    </location>
</feature>
<feature type="mutagenesis site" description="No change in methylation levels." evidence="19">
    <original>R</original>
    <variation>K</variation>
    <location>
        <position position="249"/>
    </location>
</feature>
<feature type="mutagenesis site" description="Some decrease in levels of methylation. Greatly decreased methylation levels; when associated with K-248." evidence="19">
    <original>R</original>
    <variation>K</variation>
    <location>
        <position position="250"/>
    </location>
</feature>
<feature type="mutagenesis site" description="Abolishes insulin-induced phosphorylation when associated with A-463. Nuclear location but transcriptional activity decreased by about 50%. Abolishes the SIRT1 deacetylase binding and increases acetylation; when associated with A-24; A-316; A-462 and A-463." evidence="7 12 13 23">
    <original>S</original>
    <variation>A</variation>
    <location>
        <position position="253"/>
    </location>
</feature>
<feature type="mutagenesis site" description="Mimics acetylation. Cytoplasmic location in absence or presence of insulin, no change on the inhibitory effect of oxidative stress on insulin-induced phosphorylations, but no inhibition of these phosphorylations by resveratrol; when associated with Q-219; Q-242; Q-245; Q-262; Q-271 and Q-291. Increased insulin-induced phosphorylation at Ser-253 and binding of 14-3-3 proteins; when associated with A-24; Q-219; Q-242; Q-245; Q-262; Q-271 and Q-291." evidence="23 31">
    <original>K</original>
    <variation>Q</variation>
    <location>
        <position position="259"/>
    </location>
</feature>
<feature type="mutagenesis site" description="Transcriptional activity not inhibited by FCOR; when associated with R-242; R-245; R-262; R-271 and R-291. Predominantly nuclear and translocates to the cytoplasm on insulin-stimulation. No change on the inhibitory effect of oxidative stress on insulin-induced phosphorylations, but no inhibition of these phosphorylations by resveratrol; when associated with R-219; R-242; R-245; R-262; R-271 and R-291. Increased binding of 14-3-3 proteins even with decreased insulin-induced phosphorylation at Ser-253; when associated with A-24; R-219; R-242; R-245; R-262; R-271 and R-291." evidence="23 31">
    <original>K</original>
    <variation>R</variation>
    <location>
        <position position="259"/>
    </location>
</feature>
<feature type="mutagenesis site" description="Mimics acetylation. Decreased DNA-binding by about half and enhanced phosphorylation by PKB/AKT1, no effect on interaction with CEBPA; when associated with either A-242 or Q-242 and either A-245 or Q-245. Cytoplasmic location in absence or presence of insulin, no change on the inhibitory effect of oxidative stress on insulin-induced phosphorylations, but no inhibition of these phosphorylations by resveratrol; when associated with Q-219; Q-242; Q-245; Q-259; Q-271 and Q-291. Increased insulin-induced phosphorylation at Ser-253 and binding of 14-3-3 proteins; when associated with A-24; Q-219; Q-242; Q-245; Q-259; Q-271 and Q-291." evidence="11 12 15 23 31">
    <original>K</original>
    <variation>Q</variation>
    <variation>A</variation>
    <location>
        <position position="262"/>
    </location>
</feature>
<feature type="mutagenesis site" description="Significant reduction in acetylation and transcriptional activity increased by about 2.0 fold. Completely abolishes acetylation, increases interaction with CEBPA and transcriptional activity increased by about 3-fold; when associated with R-242 and R-245. Transcriptional activity not inhibited by FCOR; when associated with R-242; R-245; R-259; R-271 and R-291. Predominantly nuclear and translocates to the cytoplasm on insulin-stimulation. No change on the inhibitory effect of oxidative stress on insulin-induced phosphorylations, but no inhibition of these phosphorylations by resveratrol; when associated with R-219; R-242; R-245; R-259; R-271 and R-291. Increased binding of 14-3-3 proteins even with decreased insulin-induced phosphorylation at Ser-253; when associated with A-24; R-219; R-242; R-245; R-259; R-271 and R-291." evidence="11 12 15 23 31">
    <original>K</original>
    <variation>R</variation>
    <location>
        <position position="262"/>
    </location>
</feature>
<feature type="mutagenesis site" description="Mimics acetylation. Cytoplasmic location in absence or presence of insulin, no change on the inhibitory effect of oxidative stress on insulin-induced phosphorylations, but no inhibition of these phosphorylations by resveratrol; when associated with Q-219; Q-242; Q-245; Q-259; Q-262 and Q-291. Increased insulin-induced phosphorylation at Ser-253 and binding of 14-3-3 proteins; when associated with A-24; Q-219; Q-242; Q-245; Q-259; Q-262 and Q-291." evidence="23 31">
    <original>K</original>
    <variation>Q</variation>
    <location>
        <position position="271"/>
    </location>
</feature>
<feature type="mutagenesis site" description="Transcriptional activity not inhibited by FCOR; when associated with R-242; R-245; R-259; R-262 and R-291. Predominantly nuclear and translocates to the cytoplasm on insulin-stimulation. No inhibitory effect of oxidative stress on insulin-induced phosphorylations, but no inhibition of these phosphorylations by resveratrol; when associated with R-219; R-242; R-245; R-259; R-262 and R-291. Increased binding of 14-3-3 proteins even with decreased insulin-induced phosphorylation at Ser-253; when associated with A-24; R-219; R-242; R-245; R-259; R-262 and R-291." evidence="23 31">
    <original>K</original>
    <variation>R</variation>
    <location>
        <position position="271"/>
    </location>
</feature>
<feature type="mutagenesis site" description="Decreases phosphorylation by NLK; when associated with A-295; A-326; A-380; A-391; A-399; A-413 and A-415." evidence="22">
    <original>S</original>
    <variation>A</variation>
    <location>
        <position position="284"/>
    </location>
</feature>
<feature type="mutagenesis site" description="Mimics acetylation. Cytoplasmic location in absence or presence of insulin, no change on the inhibitory effect of oxidative stress on insulin-induced phosphorylations, but no inhibition of these phosphorylations by resveratrol; when associated with Q-219; Q-242; Q-245; Q-259; Q-262 and Q-271. Increased insulin-induced phosphorylation at Ser-253 and binding of 14-3-3 proteins; when associated with A-24: Q-219; Q-242; Q-245; Q-259; Q-262 and Q-271." evidence="23 31">
    <original>K</original>
    <variation>Q</variation>
    <location>
        <position position="291"/>
    </location>
</feature>
<feature type="mutagenesis site" description="Transcriptional activity not inhibited by FCOR; when associated with R-242; R-245; R-259; R-262 and R-271. Predominantly nuclear and translocates to the cytoplasm on insulin-stimulation. No inhibitory effect of oxidative stress on insulin-induced phosphorylations, but no inhibition of these phosphorylations by resveratrol; when associated with R-219; R-242; R-245; R-259; R-262 and R-271. Increased binding of 14-3-3 proteins even with decreased insulin-induced phosphorylation at Ser-253; when associated with A-24; R-219; R-242; R-245; R-259; R-262 and R-271." evidence="23 31">
    <original>K</original>
    <variation>R</variation>
    <location>
        <position position="291"/>
    </location>
</feature>
<feature type="mutagenesis site" description="Decreases phosphorylation by NLK; when associated with A-284; A-326; A-380; A-391; A-399; A-413 and A-415." evidence="22">
    <original>S</original>
    <variation>A</variation>
    <location>
        <position position="295"/>
    </location>
</feature>
<feature type="mutagenesis site" description="Little change in levels of methylation; when associated with K-29; K-147; K-154 and K-313." evidence="19">
    <original>R</original>
    <variation>K</variation>
    <location>
        <position position="311"/>
    </location>
</feature>
<feature type="mutagenesis site" description="Little change in levels of methylation; when associated with K-29; K-147; K-154 and K-311." evidence="19">
    <original>R</original>
    <variation>K</variation>
    <location>
        <position position="313"/>
    </location>
</feature>
<feature type="mutagenesis site" description="Decreases insulin-induced phosphorylation by approximately 30%. Abolishes the SIRT1 deacetylase binding and increases acetylation; when associated with A-24; A-253; A-462 and A-463." evidence="7 13">
    <original>S</original>
    <variation>A</variation>
    <location>
        <position position="316"/>
    </location>
</feature>
<feature type="mutagenesis site" description="Decreases phosphorylation by NLK; when associated with A-284; A-295; A-380; A-391; A-399; A-413 and A-415." evidence="22">
    <original>S</original>
    <variation>A</variation>
    <location>
        <position position="326"/>
    </location>
</feature>
<feature type="mutagenesis site" description="Decreases phosphorylation by NLK; when associated with A-284; A-295; A-326; A-391; A-399; A-413 and A-415." evidence="22">
    <original>S</original>
    <variation>A</variation>
    <location>
        <position position="380"/>
    </location>
</feature>
<feature type="mutagenesis site" description="Decreases phosphorylation by NLK; when associated with A-284; A-295; A-326; A-380; A-399; A-413 and A-415." evidence="22">
    <original>S</original>
    <variation>A</variation>
    <location>
        <position position="391"/>
    </location>
</feature>
<feature type="mutagenesis site" description="Decreases phosphorylation by NLK; when associated with A-284; A-295; A-326; A-380; A-391; A-413 and A-415." evidence="22">
    <original>T</original>
    <variation>A</variation>
    <location>
        <position position="399"/>
    </location>
</feature>
<feature type="mutagenesis site" description="Decreases phosphorylation by NLK; when associated with A-284; A-295; A-326; A-380; A-391; A-399 and A-415." evidence="22">
    <original>S</original>
    <variation>A</variation>
    <location>
        <position position="413"/>
    </location>
</feature>
<feature type="mutagenesis site" description="Decreases phosphorylation by NLK; when associated with A-284; A-295; A-326; A-380; A-391; A-399 and A-413." evidence="22">
    <original>S</original>
    <variation>A</variation>
    <location>
        <position position="415"/>
    </location>
</feature>
<feature type="mutagenesis site" description="Decreased transcriptional activity by about 2-fold in the absence of serum; when associated with A-463. Nuclear location but transcriptional activity decreased by about 50%. Abolishes the SIRT1 deacetylase binding and increases acetylation; when associated with A-24; A-253; A-316 and A-463." evidence="13">
    <original>L</original>
    <variation>A</variation>
    <location>
        <position position="462"/>
    </location>
</feature>
<feature type="mutagenesis site" description="Decreased transcriptional activity by about 2-fold in the absence of serum; when associated with A-463. Nuclear location but transcriptional activity decreased by about 50%. Abolishes the SIRT1 deacetylase binding and increases acetylation; when associated with A-24; A-253; A-316 and A-462." evidence="13">
    <original>L</original>
    <variation>A</variation>
    <location>
        <position position="463"/>
    </location>
</feature>
<feature type="sequence conflict" description="In Ref. 1; AAD40636." evidence="39" ref="1">
    <original>L</original>
    <variation>P</variation>
    <location>
        <position position="619"/>
    </location>
</feature>
<comment type="function">
    <text evidence="2 3 4 8 9 10 11 13 15 16 17 23 24 25 27 28 29 30 31 32 33 37 38">Transcription factor that is the main target of insulin signaling and regulates metabolic homeostasis in response to oxidative stress (PubMed:12219087, PubMed:12754525, PubMed:15184386, PubMed:15220471, PubMed:16917544, PubMed:17090532, PubMed:17627282, PubMed:17681146, PubMed:20519497, PubMed:20668652, PubMed:21196578, PubMed:21335550, PubMed:21471200, PubMed:22298775, PubMed:22417654, PubMed:22510882, PubMed:27457971, PubMed:34914893). Binds to the insulin response element (IRE) with consensus sequence 5'-TT[G/A]TTTTG-3' and the related Daf-16 family binding element (DBE) with consensus sequence 5'-TT[G/A]TTTAC-3' (PubMed:17090532, PubMed:21335550). Activity suppressed by insulin (PubMed:12754525, PubMed:17627282). Main regulator of redox balance and osteoblast numbers and controls bone mass (PubMed:21471200, PubMed:22298775). Orchestrates the endocrine function of the skeleton in regulating glucose metabolism (PubMed:21471200, PubMed:22298775). Also acts as a key regulator of chondrogenic commitment of skeletal progenitor cells in response to lipid availability: when lipids levels are low, translocates to the nucleus and promotes expression of SOX9, which induces chondrogenic commitment and suppresses fatty acid oxidation (PubMed:32103177). Acts synergistically with ATF4 to suppress osteocalcin/BGLAP activity, increasing glucose levels and triggering glucose intolerance and insulin insensitivity (PubMed:22298775). Also suppresses the transcriptional activity of RUNX2, an upstream activator of osteocalcin/BGLAP (PubMed:21471200). Acts as an inhibitor of glucose sensing in pancreatic beta cells by acting as a transcription repressor and suppressing expression of PDX1 (PubMed:12219087, PubMed:27457971). In hepatocytes, promotes gluconeogenesis by acting together with PPARGC1A and CEBPA to activate the expression of genes such as IGFBP1, G6PC1 and PCK1 (PubMed:12754525, PubMed:25009184). Also promotes gluconeogenesis by directly promoting expression of PPARGC1A and G6PC1 (By similarity). Important regulator of cell death acting downstream of CDK1, PKB/AKT1 and STK4/MST1 (By similarity). Promotes neural cell death (By similarity). Mediates insulin action on adipose tissue (By similarity). Regulates the expression of adipogenic genes such as PPARG during preadipocyte differentiation and, adipocyte size and adipose tissue-specific gene expression in response to excessive calorie intake (By similarity). Regulates the transcriptional activity of GADD45A and repair of nitric oxide-damaged DNA in beta-cells (PubMed:21196578). Required for the autophagic cell death induction in response to starvation or oxidative stress in a transcription-independent manner (By similarity). Mediates the function of MLIP in cardiomyocytes hypertrophy and cardiac remodeling (By similarity). Positive regulator of apoptosis in cardiac smooth muscle cells as a result of its transcriptional activation of pro-apoptotic genes (By similarity). Regulates endothelial cell (EC) viability and apoptosis in a PPIA/CYPA-dependent manner via transcription of CCL2 and BCL2L11 which are involved in EC chemotaxis and apoptosis (By similarity).</text>
</comment>
<comment type="subunit">
    <text evidence="4 9 11 13 14 15 16 17 18 20 22 24 26 28 29 30 31 35 38">Interacts with EP300 and CREBBP; the interactions acetylate FOXO1. Interacts with the 14-3-3 proteins, YWHAG and YWHAZ; the interactions require insulin-stimulated phosphorylation on Thr-24, promote nuclear exit and loss of transcriptional activity. Interacts with SKP2; the interaction ubiquitinates FOXO1 leading to its proteasomal degradation. Interacts with PMRT1; methylates FOXO1, prevents PKB/AKT1 phosphorylation and retains FOXO1 in the nucleus (By similarity). Interacts (via an N-terminal domain) with FCOR; the interaction is direct, occurs in a forskolin-independent manner and prevents SIRT1 binding to FOXO1. Interacts (via the C-terminal half) with ATF4 (via its DNA-binding domain); the interaction occurs in osteoblasts, regulates glucose homeostasis via suppression of beta-cell proliferation and subsequent decrease in insulin production. Interacts with RUNX2; the interaction inhibits RUNX2 transcriptional activity and mediates the IGF1/insulin-dependent BGLAP expression in osteoblasts. Interacts with PPP2R1A; the interaction regulates the dephosphorylation of FOXO1 at Thr-24 and Ser-253 leading to its nuclear import. Binds to CDK1. Interacts with LRPPRC. Interacts with RUNX2; the interaction inhibits RUNX2 transcriptional activity and mediates the IGF1/insulin-dependent BGLAP expression in osteoblasts. Interacts with NLK. Interacts with SIRT1; the interaction results in the deacetylation of FOXO1 leading to activation of FOXO1-mediated transcription of genes involved in DNA repair and stress resistance. The interaction requires the presence of KRIT1 and is inhibited by FCOR. Interacts with SIRT2; the interaction is disrupted in response to oxidative stress or serum deprivation, leading to increased level of acetylated FOXO1, which promotes stress-induced autophagy by stimulating E1-like activating enzyme ATG7. Interacts (acetylated form) with ATG7; the interaction is increased in response to oxidative stress or serum deprivation and promotes the autophagic process leading to cell death. Interacts (acetylated form) with PPARG (PubMed:12754525, PubMed:15220471, PubMed:16917544, PubMed:17050673, PubMed:17681146, PubMed:19037106, PubMed:20061393, PubMed:20668652, PubMed:21471200, PubMed:22298775, PubMed:22417654, PubMed:22510882). Interacts with XBP1 isoform 2; this interaction is direct and leads to FOXO1 ubiquitination and degradation via the proteasome pathway (PubMed:21317886). Interacts (via the Fork-head domain) with CEBPA; the interaction increases when FOXO1 is deacetylated (PubMed:17090532, PubMed:17627282). Interacts with WDFY2 (PubMed:18388859). Forms a complex with WDFY2 and AKT1 (PubMed:18388859). Interacts with CRY1 (PubMed:28790135). Interacts with PPIA/CYPA; the interaction promotes FOXO1 dephosphorylation, nuclear accumulation and transcriptional activity (By similarity). Interacts with TOX4; FOXO1 is required for full induction of TOX4-dependent activity and the interaction is inhibited by insulin (PubMed:34914893). Interacts (when phosphorylated on Ser-253) with STUB1/CHIP (By similarity).</text>
</comment>
<comment type="interaction">
    <interactant intactId="EBI-1371343">
        <id>Q9R1E0</id>
    </interactant>
    <interactant intactId="EBI-2644207">
        <id>P53566</id>
        <label>Cebpa</label>
    </interactant>
    <organismsDiffer>false</organismsDiffer>
    <experiments>5</experiments>
</comment>
<comment type="interaction">
    <interactant intactId="EBI-1371343">
        <id>Q9R1E0</id>
    </interactant>
    <interactant intactId="EBI-6126630">
        <id>P0DJI6</id>
        <label>Fcor</label>
    </interactant>
    <organismsDiffer>false</organismsDiffer>
    <experiments>12</experiments>
</comment>
<comment type="interaction">
    <interactant intactId="EBI-1371343">
        <id>Q9R1E0</id>
    </interactant>
    <interactant intactId="EBI-1371262">
        <id>Q6PB66</id>
        <label>Lrpprc</label>
    </interactant>
    <organismsDiffer>false</organismsDiffer>
    <experiments>2</experiments>
</comment>
<comment type="interaction">
    <interactant intactId="EBI-1371343">
        <id>Q9R1E0</id>
    </interactant>
    <interactant intactId="EBI-4422078">
        <id>P51450-2</id>
        <label>Rorc</label>
    </interactant>
    <organismsDiffer>false</organismsDiffer>
    <experiments>2</experiments>
</comment>
<comment type="interaction">
    <interactant intactId="EBI-1371343">
        <id>Q9R1E0</id>
    </interactant>
    <interactant intactId="EBI-608057">
        <id>P10275</id>
        <label>AR</label>
    </interactant>
    <organismsDiffer>true</organismsDiffer>
    <experiments>4</experiments>
</comment>
<comment type="interaction">
    <interactant intactId="EBI-1371343">
        <id>Q9R1E0</id>
    </interactant>
    <interactant intactId="EBI-1802965">
        <id>Q96EB6</id>
        <label>SIRT1</label>
    </interactant>
    <organismsDiffer>true</organismsDiffer>
    <experiments>2</experiments>
</comment>
<comment type="subcellular location">
    <subcellularLocation>
        <location evidence="18 26 33 37">Cytoplasm</location>
    </subcellularLocation>
    <subcellularLocation>
        <location evidence="16 18 21 22 25 26 29 33 35 37">Nucleus</location>
    </subcellularLocation>
    <text evidence="4 19 21 22 25 29 33 37">Shuttles between the cytoplasm and nucleus (PubMed:32103177). Largely nuclear in unstimulated cells (By similarity). In osteoblasts, colocalizes with ATF4 and RUNX2 in the nucleus (PubMed:22298775). Serum deprivation increases localization to the nucleus, leading to activate expression of SOX9 and subsequent chondrogenesis (PubMed:32103177). Insulin-induced phosphorylation at Ser-253 by PKB/AKT1 leads, via stimulation of Thr-24 phosphorylation, to binding of 14-3-3 proteins and nuclear export to the cytoplasm where it is degraded by the ubiquitin-proteasomal pathway (By similarity). Phosphorylation at Ser-249 by CDK1 disrupts binding of 14-3-3 proteins and promotes nuclear accumulation (By similarity). Phosphorylation by NLK results in nuclear export (PubMed:20061393). Translocates to the nucleus upon oxidative stress-induced phosphorylation at Ser-212 by STK4/MST1 (By similarity). SGK1-mediated phosphorylation also results in nuclear translocation (PubMed:19965929). Retained in the nucleus under stress stimuli including oxidative stress, nutrient deprivation or nitric oxide (PubMed:21196578). Methylated form is nuclear (PubMed:18951090). PPIA/CYPA stimulates its nuclear accumulation (By similarity). Deacetylation by SIRT6, promotes its translocation into the cytoplasm (PubMed:27457971).</text>
</comment>
<comment type="tissue specificity">
    <text evidence="16 31 34">Expressed in liver, white and brown adipose tissues (at protein level).</text>
</comment>
<comment type="developmental stage">
    <text evidence="16">In liver, barely expressed at 14.5 dpc, expression dramatically increases at 18.5 dpc. Abundantly expressed in neonate liver but levels strongly decrease in adult liver (at protein level).</text>
</comment>
<comment type="induction">
    <text evidence="18 24">Expression is regulated by KRIT1 (PubMed:20668652). Transiently up-regulated during adipogenesis (at protein level) (PubMed:18388859).</text>
</comment>
<comment type="PTM">
    <text evidence="4 7 12 21 23">Phosphorylation by NLK promotes nuclear export and inhibits the transcriptional activity. In response to growth factors, phosphorylation on Thr-24, Ser-253 and Ser-319 by PKB/AKT1 promotes nuclear export and inactivation of transactivational activity. Phosphorylation on Thr-24 is required for binding 14-3-3 proteins. Phosphorylation of Ser-253 decreases DNA-binding activity and promotes the phosphorylation of Thr-24 and Ser-316, permitting phosphorylation of Ser-319 and Ser-322, probably by CDK1, leading to nuclear exclusion and loss of function. Stress signals, such as response to oxygen or nitric oxide, attenuate the PKB/AKT1-mediated phosphorylation leading to nuclear retention. Phosphorylation of Ser-326 is independent of IGF1 and leads to reduced function. Dephosphorylated on Thr-24 and Ser-253 by PP2A in beta-cells under oxidative stress leading to nuclear retention (By similarity). Phosphorylation of Ser-246 by CDK1 disrupts binding of 14-3-3 proteins leading to nuclear accumulation and has no effect on DNA-binding nor transcriptional activity. Phosphorylation by STK4/MST1 on Ser-209, upon oxidative stress, inhibits binding to 14-3-3 proteins and nuclear export (By similarity). PPIA/CYPA promotes its dephosphorylation on Ser-253 (By similarity).</text>
</comment>
<comment type="PTM">
    <text evidence="4 35">Ubiquitinated by SKP2 (By similarity). Ubiquitinated, leading to proteasomal degradation (PubMed:28790135). Ubiquitinated by STUB1/CHIP; when Ser-253 is phosphorylated (By similarity).</text>
</comment>
<comment type="PTM">
    <text evidence="7 12 19 21 23">Methylation inhibits PKB/AKT1-mediated phosphorylation at Ser-253, promoting nuclear retention and increasing the transcriptional activity and cell death. Methylation increased by oxidative stress.</text>
</comment>
<comment type="PTM">
    <text evidence="4 11 12 15 17 20 23 25 32 33 36">Acetylation at Lys-259 and Lys-271 are necessary for autophagic cell death induction (By similarity). Deacetylated by SIRT2 in response to oxidative stress or serum deprivation, thereby negatively regulating FOXO1-mediated autophagic cell death (By similarity). Once in the nucleus, acetylated by CREBBP/EP300 (By similarity). Acetylation diminishes the interaction with target DNA and attenuates the transcriptional activity. It increases the phosphorylation at Ser-253, and is required for the transcriptional inhibition by FCOR (By similarity). Deacetylation by SIRT1 results in reactivation of the transcriptional activity (PubMed:15220471, PubMed:16076959, PubMed:17090532). Acetylation of FOXO1 diminishes its binding to PPARG in adipocytes. Deacetylated by SIRT2; deacetylation of FOXO1 directly increases its repressive binding to PPARG and inhibits adipocyte differentiation (PubMed:17681146, PubMed:19037106, PubMed:20519497, PubMed:21196578). Oxidative stress by hydrogen peroxide treatment appears to promote deacetylation and uncoupling of insulin-induced phosphorylation (By similarity). By contrast, resveratrol acts independently of acetylation (By similarity). Acetylated at Lys-420, promoting its localization to the nucleus and transcription factor activity (PubMed:25009184). Deacetylation at Lys-420 by SIRT6, promotes its translocation into the cytoplasm, preventing its transcription factor activity (PubMed:25009184, PubMed:27457971). Deacetylation and subsequent inhibition by SIRT6 has different effects depending on cell types: it inhibits gluconeogenesis in hepatocytes, promotes glucose sensing in pancreatic beta-cells and regulates lipid catabolism in brown adipocytes (PubMed:25009184, PubMed:27457971, PubMed:31442424).</text>
</comment>
<comment type="disruption phenotype">
    <text evidence="10 29">Null mice die around embryonic day 11 and exhibit abnormal angiogenesis. Defects are observed in branchial arches and there is remarkably impaired vascular development of embryos and yolk sacs. Exogeneous VEGF on FOX1-deficient endothelial cells show markedly different morphological response. Active osteocalcin/BGLAP as well as serum insulin and beta-cell and gonadal fat levels were increased, but there is no change in total fat content, lean mass, and body weight. Effect on RUNX2 activity was inhibited. FOXO1 and ATF4 double happlo-insufficient mice exhibit also an increase in insulin levels and beta cell proliferation, but there is an increase in insulin sensitivity demonstrated by an increase in expression of insulin-sensitizing hormone adiponectin. Gonadal fat levels and adipocyte numbers were decreased. Osteocalcin/BGLAP levels were unchanged.</text>
</comment>
<comment type="miscellaneous">
    <text>In an animal model of diabetes mellitus type 2 (db/db mice), beta-cell islets exhibit increased levels of PPP2R1A leading to increased dephosphorylation at Thr-24 and Ser-253 and nuclear retention of FOXO1.</text>
</comment>
<keyword id="KW-0007">Acetylation</keyword>
<keyword id="KW-0010">Activator</keyword>
<keyword id="KW-0053">Apoptosis</keyword>
<keyword id="KW-0072">Autophagy</keyword>
<keyword id="KW-0963">Cytoplasm</keyword>
<keyword id="KW-0221">Differentiation</keyword>
<keyword id="KW-0238">DNA-binding</keyword>
<keyword id="KW-0488">Methylation</keyword>
<keyword id="KW-0539">Nucleus</keyword>
<keyword id="KW-0597">Phosphoprotein</keyword>
<keyword id="KW-1185">Reference proteome</keyword>
<keyword id="KW-0804">Transcription</keyword>
<keyword id="KW-0805">Transcription regulation</keyword>
<keyword id="KW-0832">Ubl conjugation</keyword>
<organism>
    <name type="scientific">Mus musculus</name>
    <name type="common">Mouse</name>
    <dbReference type="NCBI Taxonomy" id="10090"/>
    <lineage>
        <taxon>Eukaryota</taxon>
        <taxon>Metazoa</taxon>
        <taxon>Chordata</taxon>
        <taxon>Craniata</taxon>
        <taxon>Vertebrata</taxon>
        <taxon>Euteleostomi</taxon>
        <taxon>Mammalia</taxon>
        <taxon>Eutheria</taxon>
        <taxon>Euarchontoglires</taxon>
        <taxon>Glires</taxon>
        <taxon>Rodentia</taxon>
        <taxon>Myomorpha</taxon>
        <taxon>Muroidea</taxon>
        <taxon>Muridae</taxon>
        <taxon>Murinae</taxon>
        <taxon>Mus</taxon>
        <taxon>Mus</taxon>
    </lineage>
</organism>
<gene>
    <name type="primary">Foxo1</name>
    <name type="synonym">Fkhr</name>
    <name type="synonym">Foxo1a</name>
</gene>